<sequence>MSTNPKPQRKTKRNTNRRPQDVKFPGGGQIVGGVYLLPRRGPRLGVRATRKTSERSQPRGRRQPIPKDRRSTGKSWGKPGYPWPLYGNEGLGWAGWLLSPRGSRPSWGPNDPRHRSRNVGKVIDTLTCGFADLMGYIPVVGAPLGGVARALAHGVRVLEDGVNFATGNLPGCSFSIFLLALLSCITTPVSAAEVKNISTGYMVTNDCTNDSITWQLQAAVLHVPGCVPCEKVGNTSRCWIPVSPNVAVQQPGALTQGLRTHIDMVVMSATLCSALYVGDLCGGVMLAAQMFIVSPQHHWFVQDCNCSIYPGTITGHRMAWDMMMNWSPTATMILAYAMRVPEVIIDIIGGAHWGVMFGLAYFSMQGAWAKVVVILLLAAGVDAQTHTVGGSTAHNARTLTGMFSLGARQKIQLINTNGSWHINRTALNCNDSLHTGFLASLFYTHSFNSSGCPERMSACRSIEAFRVGWGALQYEDNVTNPEDMRPYCWHYPPRQCGVVSASSVCGPVYCFTPSPVVVGTTDRLGAPTYTWGENETDVFLLNSTRPPQGSWFGCTWMNSTGYTKTCGAPPCRIRADFNASMDLLCPTDCFRKHPDTTYIKCGSGPWLTPRCLIDYPYRLWHYPCTVNYTIFKIRMYVGGVEHRLTAACNFTRGDRCNLEDRDRSQLSPLLHSTTEWAILPCTYSDLPALSTGLLHLHQNIVDVQFMYGLSPALTKYIVRWEWVVLLFLLLADARVCACLWMLILLGQAEAALEKLVVLHAASAASCNGFLYFVIFFVAAWYIKGRVVPLATYSLTGLWSFGLLLLALPQQAYAYDASVHGQIGAALLVLITLFTLTPGYKTLLSRFLWWLCYLLTLAEAMVQEWAPPMQVRGGRDGIIWAVAIFCPGVVFDITKWLLAVLGPAYLLKGALTRVPYFVRAHALLRMCTMVRHLAGGRYVQMVLLALGRWTGTYIYDHLTPMSDWAANGLRDLAVAVEPIIFSPMEKKVIVWGAETAACGDILHGLPVSARLGREVLLGPADGYTSKGWSLLAPITAYAQQTRGLLGTIVVSMTGRDKTEQAGEIQVLSTVTQSFLGTTISGVLWTVYHGAGNKTLAGSRGPVTQMYSSAEGDLVGWPSPPGTKSLEPCTCGAVDLYLVTRNADVIPARRRGDKRGALLSPRPLSTLKGSSGGPVLCPRGHAVGVFRAAVCSRGVAKSIDFIPVETLDIVTRSPTFSDNSTPPAVPQTYQVGYLHAPTGSGKSTKVPVAYAAQGYKVLVLNPSVAATLGFGAYLSKAHGINPNIRTGVRTVTTGAPITYSTYGKFLADGGCAGGAYDIIICDECHAVDSTTILGIGTVLDQAETAGVRLTVLATATPPGSVTTPHPNIEEVALGQEGEIPFYGRAIPLSYIKGGRHLIFCHSKKKCDELAAALRGMGLNAVAYYRGLDVSVIPTQGDVVVVATDALMTGFTGDFDSVIDCNVAVTQVVDFSLDPTFTITTQTVPQDAVSRSQRRGRTGRGRLGIYRYVSTGERASGMFDSVVLCECYDAGAAWYELTPAETTVRLRAYFNTPGLPVCQDHLEFWEAVFTGLTHIDAHFLSQTKQSGENFAYLTAYQATVCARAKAPPPSWDVMWKCLTRLKPTLVGPTPLLYRLGSVTNEVTLTHPVTKYIATCMQADLEVMTSTWVLAGGVLAAVAAYCLATGCVCIIGRLHVNQRAVVAPDKEVLYEAFDEMEECASRAALIEEGQRIAEMLKSKIQGLLQQASKQAQDIQPAVQASWPKVEQFWAKHMWNFISGIQYLAGLSTLPGNPAVASMMAFSAALTSPLSTSTTILLNILGGWLASQIAPPAGATGFVVSGLVGAAVGSIGLGKVLVDILAGYGAGISGALVAFKIMSGEKPSMEDVVNLLPGILSPGALVVGVICAAILRRHVGPGEGAVQWMNRLIAFASRGNHVAPTHYVTESDASQRVTQLLGSLTITSLLRRLHNWITEDCPIPCSGSWLRDVWDWVCTILTDFKNWLTSKLFPKMPGLPFISCQKGYKGVWAGTGIMTTRCPCGANISGNVRLGSMRITGPKTCMNIWQGTFPINCYTEGQCVPKPAPNFKIAIWRVAASEYAEVTQHGSYHYITGLTTDNLKVPCQLPSPEFFSWVDGVQIHRFAPIPKPFFRDEVSFCVGLNSFVVGSQLPCDPEPDTDVLTSMLTDPSHITAETAARRLARGSPPSEASSSASQLSAPSLRATCTTHGKAYDVDMVDANLFMGGDVTRIESESKVVVLDSLDPMVEERSDLEPSIPSEYMLPKKRFPPALPAWARPDYNPPLVESWKRPDYQPATVAGCALPPPKKTPTPPPRRRRTVGLSESSIADALQQLAIKSFGQPPPSGDSGLSTGADAADSGSRTPPDELALSETGSISSMPPLEGEPGDPDLEPEQVELQPPPQGGVVTPGSGSGSWSTCSEEDDSVVCCSMSYSWTGALITPCSPEEEKLPINPLSNSLLRYHNKVYCTTSKSASLRAKKVTFDRMQALDAHYDSVLKDIKLAASKVTARLLTLEEACQLTPPHSARSKYGFGAKEVRSLSGRAVNHIKSVWKDLLEDTQTPIPTTIMAKNEVFCVDPTKGGKKAARLIVYPDLGVRVCEKMALYDITQKLPQAVMGASYGFQYSPAQRVEFLLKAWAEKKDPMGFSYDTRCFDSTVTERDIRTEESIYRACSLPEEAHTAIHSLTERLYVGGPMFNSKGQTCGYRRCRASGVLTTSMGNTITCYVKALAACKAAGIIAPTMLVCGDDLVVISESQGTEEDERNLRAFTEAMTRYSAPPGDPPRPEYDLELITSCSSNVSVALGPQGRRRYYLTRDPTTPIARAAWETVRHSPVNSWLGNIIQYAPTIWARMVLMTHFFSILMAQDTLDQNLNFEMYGAVYSVSPLDLPAIIERLHGLDAFSLHTYTPHELTRVASALRKLGAPPLRAWKSRARAVRASLISRGGRAAVCGRYLFNWAVKTKLKLTPLPEARLLDLSSWFTVGAGGGDIYHSVSRARPRLLLLGLLLLFVGVGLFLLPAR</sequence>
<reference key="1">
    <citation type="journal article" date="1991" name="J. Gen. Virol.">
        <title>Nucleotide sequence of the genomic RNA of hepatitis C virus isolated from a human carrier: comparison with reported isolates for conserved and divergent regions.</title>
        <authorList>
            <person name="Okamoto H."/>
            <person name="Okada S."/>
            <person name="Sugiyama Y."/>
            <person name="Kurai K."/>
            <person name="Lizuka H."/>
            <person name="Machida A."/>
            <person name="Miyakawa Y."/>
            <person name="Mayumi M."/>
        </authorList>
    </citation>
    <scope>NUCLEOTIDE SEQUENCE [GENOMIC RNA]</scope>
</reference>
<reference key="2">
    <citation type="journal article" date="2000" name="J. Viral Hepat.">
        <title>Properties of the hepatitis C virus core protein: a structural protein that modulates cellular processes.</title>
        <authorList>
            <person name="McLauchlan J."/>
        </authorList>
    </citation>
    <scope>REVIEW</scope>
</reference>
<reference key="3">
    <citation type="journal article" date="2004" name="Hepatology">
        <title>Structural biology of hepatitis C virus.</title>
        <authorList>
            <person name="Penin F."/>
            <person name="Dubuisson J."/>
            <person name="Rey F.A."/>
            <person name="Moradpour D."/>
            <person name="Pawlotsky J.-M."/>
        </authorList>
    </citation>
    <scope>REVIEW</scope>
</reference>
<reference key="4">
    <citation type="journal article" date="2005" name="J. Biol. Chem.">
        <title>Crystal structures of the RNA-dependent RNA polymerase genotype 2a of hepatitis C virus reveal two conformations and suggest mechanisms of inhibition by non-nucleoside inhibitors.</title>
        <authorList>
            <person name="Biswal B.K."/>
            <person name="Cherney M.M."/>
            <person name="Wang M."/>
            <person name="Chan L."/>
            <person name="Yannopoulos C.G."/>
            <person name="Bilimoria D."/>
            <person name="Nicolas O."/>
            <person name="Bedard J."/>
            <person name="James M.N.G."/>
        </authorList>
    </citation>
    <scope>X-RAY CRYSTALLOGRAPHY (1.9 ANGSTROMS) OF 2443-3012</scope>
</reference>
<reference evidence="23" key="5">
    <citation type="journal article" date="2011" name="J. Virol.">
        <title>A comprehensive structure-function comparison of hepatitis C virus strain JFH1 and J6 polymerases reveals a key residue stimulating replication in cell culture across genotypes.</title>
        <authorList>
            <person name="Schmitt M."/>
            <person name="Scrima N."/>
            <person name="Radujkovic D."/>
            <person name="Caillet-Saguy C."/>
            <person name="Simister P.C."/>
            <person name="Friebe P."/>
            <person name="Wicht O."/>
            <person name="Klein R."/>
            <person name="Bartenschlager R."/>
            <person name="Lohmann V."/>
            <person name="Bressanelli S."/>
        </authorList>
    </citation>
    <scope>X-RAY CRYSTALLOGRAPHY (1.80 ANGSTROMS) OF 2443-3005</scope>
    <scope>CATALYTIC ACTIVITY (RNA-DIRECTED RNA POLYMERASE)</scope>
</reference>
<reference evidence="24" key="6">
    <citation type="journal article" date="2012" name="J. Virol.">
        <title>Two crucial early steps in RNA synthesis by the hepatitis C virus polymerase involve a dual role of residue 405.</title>
        <authorList>
            <person name="Scrima N."/>
            <person name="Caillet-Saguy C."/>
            <person name="Ventura M."/>
            <person name="Harrus D."/>
            <person name="Astier-Gin T."/>
            <person name="Bressanelli S."/>
        </authorList>
    </citation>
    <scope>X-RAY CRYSTALLOGRAPHY (1.90 ANGSTROMS) OF 2443-3012</scope>
    <scope>MUTAGENESIS OF VAL-2847</scope>
</reference>
<accession>P26660</accession>
<dbReference type="EC" id="3.4.22.-" evidence="4"/>
<dbReference type="EC" id="3.4.21.98" evidence="6"/>
<dbReference type="EC" id="3.6.1.15" evidence="6"/>
<dbReference type="EC" id="3.6.4.13" evidence="6"/>
<dbReference type="EC" id="2.7.7.48" evidence="20"/>
<dbReference type="EMBL" id="D00944">
    <property type="protein sequence ID" value="BAA00792.1"/>
    <property type="molecule type" value="Genomic_RNA"/>
</dbReference>
<dbReference type="PIR" id="JQ1303">
    <property type="entry name" value="JQ1303"/>
</dbReference>
<dbReference type="PDB" id="1YUY">
    <property type="method" value="X-ray"/>
    <property type="resolution" value="1.90 A"/>
    <property type="chains" value="A=2443-3012"/>
</dbReference>
<dbReference type="PDB" id="1YV2">
    <property type="method" value="X-ray"/>
    <property type="resolution" value="2.50 A"/>
    <property type="chains" value="A=2443-3012"/>
</dbReference>
<dbReference type="PDB" id="1YVX">
    <property type="method" value="X-ray"/>
    <property type="resolution" value="2.00 A"/>
    <property type="chains" value="A=2443-3012"/>
</dbReference>
<dbReference type="PDB" id="1YVZ">
    <property type="method" value="X-ray"/>
    <property type="resolution" value="2.20 A"/>
    <property type="chains" value="A=2443-3012"/>
</dbReference>
<dbReference type="PDB" id="2XWH">
    <property type="method" value="X-ray"/>
    <property type="resolution" value="1.80 A"/>
    <property type="chains" value="A=2443-3005"/>
</dbReference>
<dbReference type="PDB" id="4ADP">
    <property type="method" value="X-ray"/>
    <property type="resolution" value="1.90 A"/>
    <property type="chains" value="A=2443-3012"/>
</dbReference>
<dbReference type="PDBsum" id="1YUY"/>
<dbReference type="PDBsum" id="1YV2"/>
<dbReference type="PDBsum" id="1YVX"/>
<dbReference type="PDBsum" id="1YVZ"/>
<dbReference type="PDBsum" id="2XWH"/>
<dbReference type="PDBsum" id="4ADP"/>
<dbReference type="BMRB" id="P26660"/>
<dbReference type="SMR" id="P26660"/>
<dbReference type="IntAct" id="P26660">
    <property type="interactions" value="7"/>
</dbReference>
<dbReference type="BindingDB" id="P26660"/>
<dbReference type="DrugBank" id="DB03388">
    <property type="generic name" value="3-[(2,4-Dichlorobenzoyl)(Isopropyl)Amino]-5-Phenylthiophene-2-Carboxylic Acid"/>
</dbReference>
<dbReference type="DrugBank" id="DB03647">
    <property type="generic name" value="3-[Isopropyl(4-Methylbenzoyl)Amino]-5-Phenylthiophene-2-Carboxylic Acid"/>
</dbReference>
<dbReference type="MEROPS" id="S29.001"/>
<dbReference type="ABCD" id="P26660">
    <property type="antibodies" value="1 sequenced antibody"/>
</dbReference>
<dbReference type="euHCVdb" id="D00944"/>
<dbReference type="EvolutionaryTrace" id="P26660"/>
<dbReference type="Proteomes" id="UP000002682">
    <property type="component" value="Segment"/>
</dbReference>
<dbReference type="GO" id="GO:0044167">
    <property type="term" value="C:host cell endoplasmic reticulum membrane"/>
    <property type="evidence" value="ECO:0007669"/>
    <property type="project" value="UniProtKB-SubCell"/>
</dbReference>
<dbReference type="GO" id="GO:0044186">
    <property type="term" value="C:host cell lipid droplet"/>
    <property type="evidence" value="ECO:0007669"/>
    <property type="project" value="UniProtKB-SubCell"/>
</dbReference>
<dbReference type="GO" id="GO:0044191">
    <property type="term" value="C:host cell mitochondrial membrane"/>
    <property type="evidence" value="ECO:0007669"/>
    <property type="project" value="UniProtKB-SubCell"/>
</dbReference>
<dbReference type="GO" id="GO:0042025">
    <property type="term" value="C:host cell nucleus"/>
    <property type="evidence" value="ECO:0007669"/>
    <property type="project" value="UniProtKB-SubCell"/>
</dbReference>
<dbReference type="GO" id="GO:0044220">
    <property type="term" value="C:host cell perinuclear region of cytoplasm"/>
    <property type="evidence" value="ECO:0007669"/>
    <property type="project" value="UniProtKB-SubCell"/>
</dbReference>
<dbReference type="GO" id="GO:0020002">
    <property type="term" value="C:host cell plasma membrane"/>
    <property type="evidence" value="ECO:0007669"/>
    <property type="project" value="UniProtKB-SubCell"/>
</dbReference>
<dbReference type="GO" id="GO:0016020">
    <property type="term" value="C:membrane"/>
    <property type="evidence" value="ECO:0007669"/>
    <property type="project" value="UniProtKB-KW"/>
</dbReference>
<dbReference type="GO" id="GO:1990904">
    <property type="term" value="C:ribonucleoprotein complex"/>
    <property type="evidence" value="ECO:0007669"/>
    <property type="project" value="UniProtKB-KW"/>
</dbReference>
<dbReference type="GO" id="GO:0019031">
    <property type="term" value="C:viral envelope"/>
    <property type="evidence" value="ECO:0007669"/>
    <property type="project" value="UniProtKB-KW"/>
</dbReference>
<dbReference type="GO" id="GO:0019013">
    <property type="term" value="C:viral nucleocapsid"/>
    <property type="evidence" value="ECO:0007669"/>
    <property type="project" value="UniProtKB-KW"/>
</dbReference>
<dbReference type="GO" id="GO:0055036">
    <property type="term" value="C:virion membrane"/>
    <property type="evidence" value="ECO:0007669"/>
    <property type="project" value="UniProtKB-SubCell"/>
</dbReference>
<dbReference type="GO" id="GO:0005524">
    <property type="term" value="F:ATP binding"/>
    <property type="evidence" value="ECO:0007669"/>
    <property type="project" value="UniProtKB-KW"/>
</dbReference>
<dbReference type="GO" id="GO:0016887">
    <property type="term" value="F:ATP hydrolysis activity"/>
    <property type="evidence" value="ECO:0007669"/>
    <property type="project" value="RHEA"/>
</dbReference>
<dbReference type="GO" id="GO:0015267">
    <property type="term" value="F:channel activity"/>
    <property type="evidence" value="ECO:0007669"/>
    <property type="project" value="UniProtKB-KW"/>
</dbReference>
<dbReference type="GO" id="GO:0004197">
    <property type="term" value="F:cysteine-type endopeptidase activity"/>
    <property type="evidence" value="ECO:0007669"/>
    <property type="project" value="InterPro"/>
</dbReference>
<dbReference type="GO" id="GO:0003723">
    <property type="term" value="F:RNA binding"/>
    <property type="evidence" value="ECO:0007669"/>
    <property type="project" value="UniProtKB-KW"/>
</dbReference>
<dbReference type="GO" id="GO:0003724">
    <property type="term" value="F:RNA helicase activity"/>
    <property type="evidence" value="ECO:0007669"/>
    <property type="project" value="UniProtKB-EC"/>
</dbReference>
<dbReference type="GO" id="GO:0003968">
    <property type="term" value="F:RNA-directed RNA polymerase activity"/>
    <property type="evidence" value="ECO:0007669"/>
    <property type="project" value="UniProtKB-KW"/>
</dbReference>
<dbReference type="GO" id="GO:0004252">
    <property type="term" value="F:serine-type endopeptidase activity"/>
    <property type="evidence" value="ECO:0007669"/>
    <property type="project" value="InterPro"/>
</dbReference>
<dbReference type="GO" id="GO:0005198">
    <property type="term" value="F:structural molecule activity"/>
    <property type="evidence" value="ECO:0007669"/>
    <property type="project" value="InterPro"/>
</dbReference>
<dbReference type="GO" id="GO:0008270">
    <property type="term" value="F:zinc ion binding"/>
    <property type="evidence" value="ECO:0007669"/>
    <property type="project" value="InterPro"/>
</dbReference>
<dbReference type="GO" id="GO:0075512">
    <property type="term" value="P:clathrin-dependent endocytosis of virus by host cell"/>
    <property type="evidence" value="ECO:0007669"/>
    <property type="project" value="UniProtKB-KW"/>
</dbReference>
<dbReference type="GO" id="GO:0039654">
    <property type="term" value="P:fusion of virus membrane with host endosome membrane"/>
    <property type="evidence" value="ECO:0007669"/>
    <property type="project" value="UniProtKB-KW"/>
</dbReference>
<dbReference type="GO" id="GO:0034220">
    <property type="term" value="P:monoatomic ion transmembrane transport"/>
    <property type="evidence" value="ECO:0007669"/>
    <property type="project" value="UniProtKB-KW"/>
</dbReference>
<dbReference type="GO" id="GO:0006508">
    <property type="term" value="P:proteolysis"/>
    <property type="evidence" value="ECO:0007669"/>
    <property type="project" value="UniProtKB-KW"/>
</dbReference>
<dbReference type="GO" id="GO:0039520">
    <property type="term" value="P:symbiont-mediated activation of host autophagy"/>
    <property type="evidence" value="ECO:0007669"/>
    <property type="project" value="UniProtKB-KW"/>
</dbReference>
<dbReference type="GO" id="GO:0039645">
    <property type="term" value="P:symbiont-mediated perturbation of host cell cycle G1/S transition checkpoint"/>
    <property type="evidence" value="ECO:0007669"/>
    <property type="project" value="UniProtKB-KW"/>
</dbReference>
<dbReference type="GO" id="GO:0039545">
    <property type="term" value="P:symbiont-mediated suppression of host cytoplasmic pattern recognition receptor signaling pathway via inhibition of MAVS activity"/>
    <property type="evidence" value="ECO:0007669"/>
    <property type="project" value="UniProtKB-KW"/>
</dbReference>
<dbReference type="GO" id="GO:0039563">
    <property type="term" value="P:symbiont-mediated suppression of host JAK-STAT cascade via inhibition of STAT1 activity"/>
    <property type="evidence" value="ECO:0007669"/>
    <property type="project" value="UniProtKB-KW"/>
</dbReference>
<dbReference type="GO" id="GO:0039527">
    <property type="term" value="P:symbiont-mediated suppression of host TRAF-mediated signal transduction"/>
    <property type="evidence" value="ECO:0007669"/>
    <property type="project" value="UniProtKB-KW"/>
</dbReference>
<dbReference type="GO" id="GO:0039502">
    <property type="term" value="P:symbiont-mediated suppression of host type I interferon-mediated signaling pathway"/>
    <property type="evidence" value="ECO:0007669"/>
    <property type="project" value="UniProtKB-KW"/>
</dbReference>
<dbReference type="GO" id="GO:0019087">
    <property type="term" value="P:symbiont-mediated transformation of host cell"/>
    <property type="evidence" value="ECO:0007669"/>
    <property type="project" value="InterPro"/>
</dbReference>
<dbReference type="GO" id="GO:0016032">
    <property type="term" value="P:viral process"/>
    <property type="evidence" value="ECO:0000315"/>
    <property type="project" value="CACAO"/>
</dbReference>
<dbReference type="GO" id="GO:0039694">
    <property type="term" value="P:viral RNA genome replication"/>
    <property type="evidence" value="ECO:0007669"/>
    <property type="project" value="InterPro"/>
</dbReference>
<dbReference type="GO" id="GO:0019062">
    <property type="term" value="P:virion attachment to host cell"/>
    <property type="evidence" value="ECO:0007669"/>
    <property type="project" value="UniProtKB-KW"/>
</dbReference>
<dbReference type="CDD" id="cd20903">
    <property type="entry name" value="HCV_p7"/>
    <property type="match status" value="1"/>
</dbReference>
<dbReference type="CDD" id="cd23202">
    <property type="entry name" value="Hepacivirus_RdRp"/>
    <property type="match status" value="1"/>
</dbReference>
<dbReference type="FunFam" id="2.20.25.210:FF:000002">
    <property type="entry name" value="Genome polyprotein"/>
    <property type="match status" value="1"/>
</dbReference>
<dbReference type="FunFam" id="2.30.30.710:FF:000001">
    <property type="entry name" value="Genome polyprotein"/>
    <property type="match status" value="1"/>
</dbReference>
<dbReference type="FunFam" id="3.30.160.890:FF:000001">
    <property type="entry name" value="Genome polyprotein"/>
    <property type="match status" value="1"/>
</dbReference>
<dbReference type="FunFam" id="3.30.70.270:FF:000015">
    <property type="entry name" value="Genome polyprotein"/>
    <property type="match status" value="1"/>
</dbReference>
<dbReference type="FunFam" id="3.40.50.300:FF:000557">
    <property type="entry name" value="Genome polyprotein"/>
    <property type="match status" value="1"/>
</dbReference>
<dbReference type="FunFam" id="3.40.50.300:FF:000717">
    <property type="entry name" value="Genome polyprotein"/>
    <property type="match status" value="1"/>
</dbReference>
<dbReference type="FunFam" id="4.10.710.10:FF:000001">
    <property type="entry name" value="Genome polyprotein"/>
    <property type="match status" value="1"/>
</dbReference>
<dbReference type="Gene3D" id="2.40.10.120">
    <property type="match status" value="1"/>
</dbReference>
<dbReference type="Gene3D" id="3.30.70.270">
    <property type="match status" value="2"/>
</dbReference>
<dbReference type="Gene3D" id="6.10.250.1610">
    <property type="match status" value="1"/>
</dbReference>
<dbReference type="Gene3D" id="6.10.250.1750">
    <property type="match status" value="1"/>
</dbReference>
<dbReference type="Gene3D" id="6.10.250.2920">
    <property type="match status" value="1"/>
</dbReference>
<dbReference type="Gene3D" id="2.20.25.210">
    <property type="entry name" value="Hepatitis C NS5A, domain 1B"/>
    <property type="match status" value="1"/>
</dbReference>
<dbReference type="Gene3D" id="4.10.710.10">
    <property type="entry name" value="Hepatitis C Virus Capsid Protein, Chain A"/>
    <property type="match status" value="1"/>
</dbReference>
<dbReference type="Gene3D" id="3.30.160.890">
    <property type="entry name" value="Hepatitis C virus envelope glycoprotein E1, chain C"/>
    <property type="match status" value="1"/>
</dbReference>
<dbReference type="Gene3D" id="2.30.30.710">
    <property type="entry name" value="Hepatitis C virus non-structural protein NS2, C-terminal domain"/>
    <property type="match status" value="1"/>
</dbReference>
<dbReference type="Gene3D" id="1.20.1280.150">
    <property type="entry name" value="Hepatitis C virus non-structural protein NS2, N-terminal domain"/>
    <property type="match status" value="1"/>
</dbReference>
<dbReference type="Gene3D" id="2.20.25.220">
    <property type="entry name" value="Hepatitis C virus NS5A, 1B domain"/>
    <property type="match status" value="1"/>
</dbReference>
<dbReference type="Gene3D" id="3.40.50.300">
    <property type="entry name" value="P-loop containing nucleotide triphosphate hydrolases"/>
    <property type="match status" value="2"/>
</dbReference>
<dbReference type="Gene3D" id="1.10.820.10">
    <property type="entry name" value="RNA Helicase Chain A , domain 3"/>
    <property type="match status" value="1"/>
</dbReference>
<dbReference type="Gene3D" id="2.40.10.10">
    <property type="entry name" value="Trypsin-like serine proteases"/>
    <property type="match status" value="1"/>
</dbReference>
<dbReference type="InterPro" id="IPR043502">
    <property type="entry name" value="DNA/RNA_pol_sf"/>
</dbReference>
<dbReference type="InterPro" id="IPR011492">
    <property type="entry name" value="Flavi_DEAD"/>
</dbReference>
<dbReference type="InterPro" id="IPR002521">
    <property type="entry name" value="HCV_Core_C"/>
</dbReference>
<dbReference type="InterPro" id="IPR044896">
    <property type="entry name" value="HCV_core_chain_A"/>
</dbReference>
<dbReference type="InterPro" id="IPR002522">
    <property type="entry name" value="HCV_core_N"/>
</dbReference>
<dbReference type="InterPro" id="IPR002519">
    <property type="entry name" value="HCV_Env"/>
</dbReference>
<dbReference type="InterPro" id="IPR002531">
    <property type="entry name" value="HCV_NS1"/>
</dbReference>
<dbReference type="InterPro" id="IPR002518">
    <property type="entry name" value="HCV_NS2"/>
</dbReference>
<dbReference type="InterPro" id="IPR042205">
    <property type="entry name" value="HCV_NS2_C"/>
</dbReference>
<dbReference type="InterPro" id="IPR042209">
    <property type="entry name" value="HCV_NS2_N"/>
</dbReference>
<dbReference type="InterPro" id="IPR000745">
    <property type="entry name" value="HCV_NS4a"/>
</dbReference>
<dbReference type="InterPro" id="IPR001490">
    <property type="entry name" value="HCV_NS4b"/>
</dbReference>
<dbReference type="InterPro" id="IPR002868">
    <property type="entry name" value="HCV_NS5a"/>
</dbReference>
<dbReference type="InterPro" id="IPR013192">
    <property type="entry name" value="HCV_NS5A_1a"/>
</dbReference>
<dbReference type="InterPro" id="IPR013193">
    <property type="entry name" value="HCV_NS5a_1B_dom"/>
</dbReference>
<dbReference type="InterPro" id="IPR038568">
    <property type="entry name" value="HCV_NS5A_1B_sf"/>
</dbReference>
<dbReference type="InterPro" id="IPR024350">
    <property type="entry name" value="HCV_NS5a_C"/>
</dbReference>
<dbReference type="InterPro" id="IPR049913">
    <property type="entry name" value="HCV_p7"/>
</dbReference>
<dbReference type="InterPro" id="IPR014001">
    <property type="entry name" value="Helicase_ATP-bd"/>
</dbReference>
<dbReference type="InterPro" id="IPR001650">
    <property type="entry name" value="Helicase_C-like"/>
</dbReference>
<dbReference type="InterPro" id="IPR004109">
    <property type="entry name" value="HepC_NS3_protease"/>
</dbReference>
<dbReference type="InterPro" id="IPR054175">
    <property type="entry name" value="NS3_helicase_C"/>
</dbReference>
<dbReference type="InterPro" id="IPR038170">
    <property type="entry name" value="NS5A_1a_sf"/>
</dbReference>
<dbReference type="InterPro" id="IPR027417">
    <property type="entry name" value="P-loop_NTPase"/>
</dbReference>
<dbReference type="InterPro" id="IPR009003">
    <property type="entry name" value="Peptidase_S1_PA"/>
</dbReference>
<dbReference type="InterPro" id="IPR043504">
    <property type="entry name" value="Peptidase_S1_PA_chymotrypsin"/>
</dbReference>
<dbReference type="InterPro" id="IPR043128">
    <property type="entry name" value="Rev_trsase/Diguanyl_cyclase"/>
</dbReference>
<dbReference type="InterPro" id="IPR007094">
    <property type="entry name" value="RNA-dir_pol_PSvirus"/>
</dbReference>
<dbReference type="InterPro" id="IPR002166">
    <property type="entry name" value="RNA_pol_HCV"/>
</dbReference>
<dbReference type="Pfam" id="PF07652">
    <property type="entry name" value="Flavi_DEAD"/>
    <property type="match status" value="1"/>
</dbReference>
<dbReference type="Pfam" id="PF01543">
    <property type="entry name" value="HCV_capsid"/>
    <property type="match status" value="1"/>
</dbReference>
<dbReference type="Pfam" id="PF01542">
    <property type="entry name" value="HCV_core"/>
    <property type="match status" value="1"/>
</dbReference>
<dbReference type="Pfam" id="PF01539">
    <property type="entry name" value="HCV_env"/>
    <property type="match status" value="1"/>
</dbReference>
<dbReference type="Pfam" id="PF01560">
    <property type="entry name" value="HCV_NS1"/>
    <property type="match status" value="1"/>
</dbReference>
<dbReference type="Pfam" id="PF01538">
    <property type="entry name" value="HCV_NS2"/>
    <property type="match status" value="1"/>
</dbReference>
<dbReference type="Pfam" id="PF01006">
    <property type="entry name" value="HCV_NS4a"/>
    <property type="match status" value="1"/>
</dbReference>
<dbReference type="Pfam" id="PF01001">
    <property type="entry name" value="HCV_NS4b"/>
    <property type="match status" value="1"/>
</dbReference>
<dbReference type="Pfam" id="PF01506">
    <property type="entry name" value="HCV_NS5a"/>
    <property type="match status" value="1"/>
</dbReference>
<dbReference type="Pfam" id="PF08300">
    <property type="entry name" value="HCV_NS5a_1a"/>
    <property type="match status" value="1"/>
</dbReference>
<dbReference type="Pfam" id="PF08301">
    <property type="entry name" value="HCV_NS5a_1b"/>
    <property type="match status" value="1"/>
</dbReference>
<dbReference type="Pfam" id="PF12941">
    <property type="entry name" value="HCV_NS5a_C"/>
    <property type="match status" value="1"/>
</dbReference>
<dbReference type="Pfam" id="PF22027">
    <property type="entry name" value="NS3_helicase_C"/>
    <property type="match status" value="1"/>
</dbReference>
<dbReference type="Pfam" id="PF02907">
    <property type="entry name" value="Peptidase_S29"/>
    <property type="match status" value="1"/>
</dbReference>
<dbReference type="Pfam" id="PF00998">
    <property type="entry name" value="RdRP_3"/>
    <property type="match status" value="1"/>
</dbReference>
<dbReference type="SMART" id="SM00487">
    <property type="entry name" value="DEXDc"/>
    <property type="match status" value="1"/>
</dbReference>
<dbReference type="SMART" id="SM00490">
    <property type="entry name" value="HELICc"/>
    <property type="match status" value="1"/>
</dbReference>
<dbReference type="SUPFAM" id="SSF56672">
    <property type="entry name" value="DNA/RNA polymerases"/>
    <property type="match status" value="1"/>
</dbReference>
<dbReference type="SUPFAM" id="SSF52540">
    <property type="entry name" value="P-loop containing nucleoside triphosphate hydrolases"/>
    <property type="match status" value="2"/>
</dbReference>
<dbReference type="SUPFAM" id="SSF50494">
    <property type="entry name" value="Trypsin-like serine proteases"/>
    <property type="match status" value="1"/>
</dbReference>
<dbReference type="PROSITE" id="PS51693">
    <property type="entry name" value="HCV_NS2_PRO"/>
    <property type="match status" value="1"/>
</dbReference>
<dbReference type="PROSITE" id="PS51192">
    <property type="entry name" value="HELICASE_ATP_BIND_1"/>
    <property type="match status" value="1"/>
</dbReference>
<dbReference type="PROSITE" id="PS51194">
    <property type="entry name" value="HELICASE_CTER"/>
    <property type="match status" value="1"/>
</dbReference>
<dbReference type="PROSITE" id="PS51822">
    <property type="entry name" value="HV_PV_NS3_PRO"/>
    <property type="match status" value="1"/>
</dbReference>
<dbReference type="PROSITE" id="PS50507">
    <property type="entry name" value="RDRP_SSRNA_POS"/>
    <property type="match status" value="1"/>
</dbReference>
<comment type="function">
    <molecule>Mature core protein</molecule>
    <text evidence="3 5 6 7 12 22">Packages viral RNA to form a viral nucleocapsid, and promotes virion budding (Probable). Participates in the viral particle production as a result of its interaction with the non-structural protein 5A (By similarity). Binds RNA and may function as a RNA chaperone to induce the RNA structural rearrangements taking place during virus replication (By similarity). Modulates viral translation initiation by interacting with viral IRES and 40S ribosomal subunit (By similarity). Affects various cell signaling pathways, host immunity and lipid metabolism (Probable). Prevents the establishment of cellular antiviral state by blocking the interferon-alpha/beta (IFN-alpha/beta) and IFN-gamma signaling pathways and by blocking the formation of phosphorylated STAT1 and promoting ubiquitin-mediated proteasome-dependent degradation of STAT1 (By similarity). Activates STAT3 leading to cellular transformation (By similarity). Regulates the activity of cellular genes, including c-myc and c-fos (By similarity). May repress the promoter of p53, and sequester CREB3 and SP110 isoform 3/Sp110b in the cytoplasm (By similarity). Represses cell cycle negative regulating factor CDKN1A, thereby interrupting an important check point of normal cell cycle regulation (By similarity). Targets transcription factors involved in the regulation of inflammatory responses and in the immune response: suppresses TNF-induced NF-kappa-B activation, and activates AP-1 (By similarity). Binds to dendritic cells (DCs) via C1QR1, resulting in down-regulation of T-lymphocytes proliferation (By similarity). Alters lipid metabolism by interacting with hepatocellular proteins involved in lipid accumulation and storage (By similarity). Induces up-regulation of FAS promoter activity, and thereby contributes to the increased triglyceride accumulation in hepatocytes (steatosis) (By similarity).</text>
</comment>
<comment type="function">
    <molecule>Envelope glycoprotein E1</molecule>
    <text evidence="6">Forms a heterodimer with envelope glycoprotein E2, which mediates virus attachment to the host cell, virion internalization through clathrin-dependent endocytosis and fusion with host membrane (By similarity). Fusion with the host cell is most likely mediated by both E1 and E2, through conformational rearrangements of the heterodimer required for fusion rather than a classical class II fusion mechanism (By similarity). E1/E2 heterodimer binds host apolipoproteins such as APOB and APOE thereby forming a lipo-viro-particle (LVP) (By similarity). APOE associated to the LVP allows the initial virus attachment to cell surface receptors such as the heparan sulfate proteoglycans (HSPGs), syndecan-1 (SDC1), syndecan-1 (SDC2), the low-density lipoprotein receptor (LDLR) and scavenger receptor class B type I (SCARB1) (By similarity). The cholesterol transfer activity of SCARB1 allows E2 exposure and binding of E2 to SCARB1 and the tetraspanin CD81 (By similarity). E1/E2 heterodimer binding on CD81 activates the epithelial growth factor receptor (EGFR) signaling pathway (By similarity). Diffusion of the complex E1-E2-EGFR-SCARB1-CD81 to the cell lateral membrane allows further interaction with Claudin 1 (CLDN1) and occludin (OCLN) to finally trigger HCV entry (By similarity).</text>
</comment>
<comment type="function">
    <molecule>Envelope glycoprotein E2</molecule>
    <text evidence="5 6">Forms a heterodimer with envelope glycoprotein E1, which mediates virus attachment to the host cell, virion internalization through clathrin-dependent endocytosis and fusion with host membrane (By similarity). Fusion with the host cell is most likely mediated by both E1 and E2, through conformational rearrangements of the heterodimer required for fusion rather than a classical class II fusion mechanism (By similarity). The interaction between envelope glycoprotein E2 and host apolipoprotein E/APOE allows the proper assembly, maturation and infectivity of the viral particles (By similarity). This interaction is probably promoted via the up-regulation of cellular autophagy by the virus (By similarity). E1/E2 heterodimer binds host apolipoproteins such as APOB and APOE thereby forming a lipo-viro-particle (LVP) (By similarity). APOE associated to the LVP allows the initial virus attachment to cell surface receptors such as the heparan sulfate proteoglycans (HSPGs), syndecan-1 (SDC1), syndecan-1 (SDC2), the low-density lipoprotein receptor (LDLR) and scavenger receptor class B type I (SCARB1) (By similarity). The cholesterol transfer activity of SCARB1 allows E2 exposure and binding of E2 to SCARB1 and the tetraspanin CD81 (By similarity). E1/E2 heterodimer binding on CD81 activates the epithelial growth factor receptor (EGFR) signaling pathway (By similarity). Diffusion of the complex E1-E2-EGFR-SCARB1-CD81 to the cell lateral membrane allows further interaction with Claudin 1 (CLDN1) and occludin (OCLN) to finally trigger HCV entry (By similarity). Inhibits host EIF2AK2/PKR activation, preventing the establishment of an antiviral state (By similarity). Viral ligand for CD209/DC-SIGN and CLEC4M/DC-SIGNR, which are respectively found on dendritic cells (DCs), and on liver sinusoidal endothelial cells and macrophage-like cells of lymph node sinuses (By similarity). These interactions allow the capture of circulating HCV particles by these cells and subsequent facilitated transmission to permissive cells such as hepatocytes and lymphocyte subpopulations (By similarity). The interaction between E2 and host amino acid transporter complex formed by SLC3A2 and SLC7A5/LAT1 may facilitate viral entry into host cell (By similarity).</text>
</comment>
<comment type="function">
    <molecule>Viroporin p7</molecule>
    <text evidence="6 12 22">Ion channel protein that acts as a viroporin and plays an essential role in the assembly, envelopment and secretion of viral particles (By similarity). Regulates the host cell secretory pathway, which induces the intracellular retention of viral glycoproteins and favors assembly of viral particles (By similarity). Creates a pore in acidic organelles and releases Ca(2+) and H(+) in the cytoplasm of infected cells, leading to a productive viral infection (By similarity). High levels of cytoplasmic Ca(2+) may trigger membrane trafficking and transport of viral ER-associated proteins to viroplasms, sites of viral genome replication (Probable). This ionic imbalance induces the assembly of the inflammasome complex, which triggers the maturation of pro-IL-1beta into IL-1beta through the action of caspase-1 (By similarity). Targets also host mitochondria and induces mitochondrial depolarization (By similarity). In addition of its role as a viroporin, acts as a lipid raft adhesion factor (By similarity).</text>
</comment>
<comment type="function">
    <molecule>Protease NS2</molecule>
    <text evidence="4 6">Cysteine protease required for the proteolytic auto-cleavage between the non-structural proteins NS2 and NS3 (By similarity). The N-terminus of NS3 is required for the function of NS2 protease (active region NS2-3) (By similarity). Promotes the initiation of viral particle assembly by mediating the interaction between structural and non-structural proteins (By similarity).</text>
</comment>
<comment type="function">
    <molecule>Serine protease/helicase NS3</molecule>
    <text evidence="6 13">Displays three enzymatic activities: serine protease with a chymotrypsin-like fold, NTPase and RNA helicase (By similarity). NS3 serine protease, in association with NS4A, is responsible for the cleavages of NS3-NS4A, NS4A-NS4B, NS4B-NS5A and NS5A-NS5B (By similarity). The NS3/NS4A complex prevents phosphorylation of host IRF3, thus preventing the establishment of dsRNA induced antiviral state (By similarity). The NS3/NS4A complex induces host amino acid transporter component SLC3A2, thus contributing to HCV propagation (By similarity). NS3 RNA helicase binds to RNA and unwinds both dsDNA and dsRNA in the 3' to 5' direction, and likely resolves RNA complicated stable secondary structures in the template strand (By similarity). Binds a single ATP and catalyzes the unzipping of a single base pair of dsRNA (By similarity). Inhibits host antiviral proteins TBK1 and IRF3 thereby preventing the establishment of an antiviral state (By similarity). Cleaves host MAVS/CARDIF thereby preventing the establishment of an antiviral state (By similarity). Cleaves host TICAM1/TRIF, thereby disrupting TLR3 signaling and preventing the establishment of an antiviral state (By similarity).</text>
</comment>
<comment type="function">
    <molecule>Non-structural protein 4B</molecule>
    <text evidence="6">Induces a specific membrane alteration that serves as a scaffold for the virus replication complex (By similarity). This membrane alteration gives rise to the so-called ER-derived membranous web that contains the replication complex (By similarity). NS4B self-interaction contributes to its function in membranous web formation (By similarity). Promotes host TRIF protein degradation in a CASP8-dependent manner thereby inhibiting host TLR3-mediated interferon signaling (By similarity). Disrupts the interaction between STING and TBK1 contributing to the inhibition of interferon signaling (By similarity).</text>
</comment>
<comment type="function">
    <molecule>Non-structural protein 5A</molecule>
    <text evidence="3 5 6 12 13">Phosphorylated protein that is indispensable for viral replication and assembly (By similarity). Both hypo- and hyperphosphorylated states are required for the viral life cycle (By similarity). The hyperphosphorylated form of NS5A is an inhibitor of viral replication (By similarity). Involved in RNA-binding and especially in binding to the viral genome (By similarity). Zinc is essential for RNA-binding (By similarity). Participates in the viral particle production as a result of its interaction with the mature viral core protein (By similarity). Its interaction with host VAPB may target the viral replication complex to vesicles (By similarity). Down-regulates viral IRES translation initiation (By similarity). Mediates interferon resistance, presumably by interacting with and inhibiting host EIF2AK2/PKR (By similarity). Prevents BIN1-induced apoptosis (By similarity). Acts as a transcriptional activator of some host genes important for viral replication when localized in the nucleus (By similarity). Via the interaction with host PACSIN2, modulates lipid droplet formation in order to promote virion assembly (By similarity). Modulates TNFRSF21/DR6 signaling pathway for viral propagation (By similarity).</text>
</comment>
<comment type="function">
    <molecule>RNA-directed RNA polymerase</molecule>
    <text evidence="6">RNA-dependent RNA polymerase that performs primer-template recognition and RNA synthesis during viral replication. Initiates RNA transcription/replication at a flavin adenine dinucleotide (FAD), resulting in a 5'- FAD cap on viral RNAs. In this way, recognition of viral 5' RNA by host pattern recognition receptors can be bypassed, thereby evading activation of antiviral pathways.</text>
</comment>
<comment type="catalytic activity">
    <molecule>Serine protease/helicase NS3</molecule>
    <reaction evidence="6">
        <text>Hydrolysis of four peptide bonds in the viral precursor polyprotein, commonly with Asp or Glu in the P6 position, Cys or Thr in P1 and Ser or Ala in P1'.</text>
        <dbReference type="EC" id="3.4.21.98"/>
    </reaction>
</comment>
<comment type="catalytic activity">
    <molecule>Serine protease/helicase NS3</molecule>
    <reaction evidence="6">
        <text>a ribonucleoside 5'-triphosphate + H2O = a ribonucleoside 5'-diphosphate + phosphate + H(+)</text>
        <dbReference type="Rhea" id="RHEA:23680"/>
        <dbReference type="ChEBI" id="CHEBI:15377"/>
        <dbReference type="ChEBI" id="CHEBI:15378"/>
        <dbReference type="ChEBI" id="CHEBI:43474"/>
        <dbReference type="ChEBI" id="CHEBI:57930"/>
        <dbReference type="ChEBI" id="CHEBI:61557"/>
        <dbReference type="EC" id="3.6.1.15"/>
    </reaction>
</comment>
<comment type="catalytic activity">
    <molecule>Serine protease/helicase NS3</molecule>
    <reaction evidence="6">
        <text>ATP + H2O = ADP + phosphate + H(+)</text>
        <dbReference type="Rhea" id="RHEA:13065"/>
        <dbReference type="ChEBI" id="CHEBI:15377"/>
        <dbReference type="ChEBI" id="CHEBI:15378"/>
        <dbReference type="ChEBI" id="CHEBI:30616"/>
        <dbReference type="ChEBI" id="CHEBI:43474"/>
        <dbReference type="ChEBI" id="CHEBI:456216"/>
        <dbReference type="EC" id="3.6.4.13"/>
    </reaction>
</comment>
<comment type="catalytic activity">
    <molecule>RNA-directed RNA polymerase</molecule>
    <reaction evidence="15 20">
        <text>RNA(n) + a ribonucleoside 5'-triphosphate = RNA(n+1) + diphosphate</text>
        <dbReference type="Rhea" id="RHEA:21248"/>
        <dbReference type="Rhea" id="RHEA-COMP:14527"/>
        <dbReference type="Rhea" id="RHEA-COMP:17342"/>
        <dbReference type="ChEBI" id="CHEBI:33019"/>
        <dbReference type="ChEBI" id="CHEBI:61557"/>
        <dbReference type="ChEBI" id="CHEBI:140395"/>
        <dbReference type="EC" id="2.7.7.48"/>
    </reaction>
</comment>
<comment type="cofactor">
    <molecule>Protease NS2</molecule>
    <cofactor evidence="4">
        <name>Zn(2+)</name>
        <dbReference type="ChEBI" id="CHEBI:29105"/>
    </cofactor>
    <text evidence="4">Activity of protease NS2 is dependent on zinc ions and completely inhibited by EDTA. This is probably due to the fact that NS2 protease activity needs NS3 N-terminus that binds a zinc atom (active region NS2-3).</text>
</comment>
<comment type="cofactor">
    <molecule>Serine protease/helicase NS3</molecule>
    <cofactor evidence="4">
        <name>Zn(2+)</name>
        <dbReference type="ChEBI" id="CHEBI:29105"/>
    </cofactor>
    <cofactor evidence="13">
        <name>Mg(2+)</name>
        <dbReference type="ChEBI" id="CHEBI:18420"/>
    </cofactor>
    <text evidence="4 13">Binds 1 zinc ion, which has a structural role (By similarity). The magnesium ion is essential for the helicase activity (By similarity).</text>
</comment>
<comment type="cofactor">
    <molecule>RNA-directed RNA polymerase</molecule>
    <cofactor evidence="4">
        <name>Mg(2+)</name>
        <dbReference type="ChEBI" id="CHEBI:18420"/>
    </cofactor>
    <text evidence="4">Binds 2 magnesium ion that constitute a dinuclear catalytic metal center.</text>
</comment>
<comment type="activity regulation">
    <text evidence="3 6">Inhibited by the antiviral drug hexamethylene amiloride (By similarity). Inhibition by amantadine appears to be genotype-dependent (By similarity). Also inhibited by long-alkyl-chain iminosugar derivatives (By similarity).</text>
</comment>
<comment type="activity regulation">
    <molecule>RNA-directed RNA polymerase</molecule>
    <text evidence="6">Activity is up-regulated by PRK2/PKN2-mediated phosphorylation.</text>
</comment>
<comment type="subunit">
    <molecule>Mature core protein</molecule>
    <text evidence="3 5 6 7 9 10 12">Homooligomer (By similarity). Interacts with E1 (via C-terminus) (By similarity). Interacts with the non-structural protein 5A (By similarity). Interacts (via N-terminus) with host STAT1 (via SH2 domain); this interaction results in decreased STAT1 phosphorylation and ubiquitin-mediated proteasome-dependent STAT1 degradation, leading to decreased IFN-stimulated gene transcription (By similarity). Interacts with host STAT3; this interaction constitutively activates STAT3 (By similarity). Interacts with host LTBR receptor (By similarity). Interacts with host TNFRSF1A receptor and possibly induces apoptosis (By similarity). Interacts with host HNRPK (By similarity). Interacts with host YWHAE (By similarity). Interacts with host UBE3A/E6AP (By similarity). Interacts with host DDX3X (By similarity). Interacts with host APOA2 (By similarity). Interacts with host RXRA protein (By similarity). Interacts with host SP110 isoform 3/Sp110b; this interaction sequesters the transcriptional corepressor SP110 away from the nucleus (By similarity). Interacts with host CREB3 nuclear transcription protein; this interaction triggers cell transformation (By similarity). Interacts with host ACY3 (By similarity). Interacts with host C1QR1 (By similarity). Interacts with host RBM24; this interaction, which enhances the interaction of the mature core protein with 5'-UTR, may inhibit viral translation and favor replication (By similarity). Interacts with host EIF2AK2/PKR; this interaction induces the autophosphorylation of EIF2AK2 (By similarity). Part of the viral assembly initiation complex composed of NS2, E1, E2, NS3, NS4A, NS5A and the mature core protein (By similarity).</text>
</comment>
<comment type="subunit">
    <molecule>Envelope glycoprotein E1</molecule>
    <text evidence="6 12">Forms a heterodimer with envelope glycoprotein E2 (By similarity). Interacts with mature core protein (By similarity). Interacts with protease NS2 (By similarity). The heterodimer E1/E2 interacts with host CLDN1; this interaction plays a role in viral entry into host cell (By similarity). Interacts with host SPSB2 (via C-terminus) (By similarity). Part of the viral assembly initiation complex composed of NS2, E1, E2, NS3, NS4A, NS5A and the mature core protein (By similarity). Interacts with host NEURL3; this interaction prevents E1 binding to glycoprotein E2 (By similarity).</text>
</comment>
<comment type="subunit">
    <molecule>Envelope glycoprotein E2</molecule>
    <text evidence="6 12 13">Forms a heterodimer with envelope glycoprotein E1 (By similarity). Interacts with host CD81 and SCARB1 receptors; this interaction may play a role in viral entry into host cell (By similarity). Interacts with host EIF2AK2/PKR; this interaction inhibits EIF2AK2 and probably allows the virus to evade the innate immune response (By similarity). Interacts with host CD209/DC-SIGN and CLEC4M/DC-SIGNR (By similarity). Interact with host SPCS1; this interaction is essential for viral particle assembly (By similarity). Interacts with protease NS2 (By similarity). The heterodimer E1/E2 interacts with host CLDN1; this interaction plays a role in viral entry into host cell (By similarity). Part of the viral assembly initiation complex composed of NS2, E1, E2, NS3, NS4A, NS5A and the mature core protein (By similarity). Interacts with host SLC3A2/4F2hc; the interaction may facilitate viral entry into host cell (By similarity). Interacts with human PLSCR1 (By similarity).</text>
</comment>
<comment type="subunit">
    <molecule>Viroporin p7</molecule>
    <text evidence="2 6 12">Homohexamer (By similarity). Homoheptamer (By similarity). Interacts with protease NS2 (By similarity).</text>
</comment>
<comment type="subunit">
    <molecule>Protease NS2</molecule>
    <text evidence="6 12">Homodimer (By similarity). Interacts with host SPCS1; this interaction is essential for viral particle assembly (By similarity). Interacts with envelope glycoprotein E1 (By similarity). Interacts with envelope glycoprotein E2 (By similarity). Interacts with viroporin p7 (By similarity). Interacts with serine protease/helicase NS3 (By similarity). Part of the replication complex composed of NS2, NS3, NS4A, NS4B, NS5A and the RNA-directed RNA polymerase embedded in an ER-derived membranous web (By similarity). Part of the viral assembly initiation complex composed of NS2, E1, E2, NS3, NS4A, NS5A and the mature core protein (By similarity).</text>
</comment>
<comment type="subunit">
    <molecule>Serine protease/helicase NS3</molecule>
    <text evidence="4 6 12 13">Interacts with protease NS2 (By similarity). Interacts with non-structural protein 4A; this interaction stabilizes the folding of NS3 serine protease (By similarity). NS3-NS4A interaction is essential for NS3 activation and allows membrane anchorage of the latter (By similarity). NS3/NS4A complex also prevents phosphorylation of host IRF3, thus preventing the establishment of dsRNA induced antiviral state (By similarity). Interacts with host MAVS; this interaction leads to the cleavage and inhibition of host MAVS (By similarity). Interacts with host TICAM1; this interaction leads to the cleavage and inhibition of host TICAM1 (By similarity). Interacts with host TANK-binding kinase/TBK1; this interaction results in the inhibition of the association between TBK1 and IRF3, which leads to the inhibition of IRF3 activation (By similarity). Interacts with host RBM24 (By similarity). Part of the replication complex composed of NS2, NS3, NS4A, NS4B, NS5A and the RNA-directed RNA polymerase embedded in an ER-derived membranous web (By similarity). Part of the viral assembly initiation complex composed of NS2, E1, E2, NS3, NS4A, NS5A and the mature core protein (By similarity).</text>
</comment>
<comment type="subunit">
    <molecule>Non-structural protein 4A</molecule>
    <text evidence="3 4 6 12">Interacts with NS3 serine protease; this interaction stabilizes the folding of NS3 serine protease (By similarity). NS3-NS4A interaction is essential for NS3 activation and allows membrane anchorage of the latter (By similarity). Interacts with non-structural protein 5A (via N-terminus) (By similarity). Part of the replication complex composed of NS2, NS3, NS4A, NS4B, NS5A and the RNA-directed RNA polymerase embedded in an ER-derived membranous web (By similarity). Part of the viral assembly initiation complex composed of NS2, E1, E2, NS3, NS4A, NS5A and the mature core protein (By similarity).</text>
</comment>
<comment type="subunit">
    <molecule>Non-structural protein 4B</molecule>
    <text evidence="6 12">Homomultimer (By similarity). Interacts with non-structural protein NS5A (By similarity). Interacts with host PLA2G4C; this interaction likely initiates the recruitment of replication complexes to lipid droplets (By similarity). Interacts with host STING; this interaction disrupts the interaction between STING and TBK1 thereby suppressing the interferon signaling (By similarity). Part of the replication complex composed of NS2, NS3, NS4A, NS4B, NS5A and the RNA-directed RNA polymerase embedded in an ER-derived membranous web (By similarity).</text>
</comment>
<comment type="subunit">
    <molecule>Non-structural protein 5A</molecule>
    <text evidence="3 4 5 6 12">Monomer. Homodimer; dimerization is required for RNA-binding (By similarity). Interacts with the mature core protein (By similarity). Interacts (via N-terminus) with non-structural protein 4A (By similarity). Interacts with non-structural protein 4B. Interacts (via region D2) with RNA-directed RNA polymerase (By similarity). Part of the viral assembly initiation complex composed of NS2, E1, E2, NS3, NS4A, NS5A and the mature core protein (By similarity). Part of the replication complex composed of NS2, NS3, NS4A, NS4B, NS5A and the RNA-directed RNA polymerase embedded in an ER-derived membranous web (By similarity). Interacts with host GRB2 (By similarity). Interacts with host BIN1 (By similarity). Interacts with host PIK3R1 (By similarity). Interacts with host SRCAP (By similarity). Interacts with host FKBP8 (By similarity). Interacts (via C-terminus) with host VAPB (via MSP domain). Interacts with host EIF2AK2/PKR; this interaction leads to disruption of EIF2AK2 dimerization by NS5A and probably allows the virus to evade the innate immune response. Interacts (via N-terminus) with host PACSIN2 (via N-terminus); this interaction attenuates protein kinase C alpha-mediated phosphorylation of PACSIN2 by disrupting the interaction between PACSIN2 and PRKCA (By similarity). Interacts (via N-terminus) with host SRC kinase (via SH2 domain) (By similarity). Interacts with most Src-family kinases (By similarity). Interacts with host IFI27 and SKP2; promotes the ubiquitin-mediated proteasomal degradation of NS5A (By similarity). Interacts with host GPS2 (By similarity). Interacts with host TNFRSF21; this interaction allows the modulation by the virus of JNK, p38 MAPK, STAT3, and Akt signaling pathways in a DR6-dependent manner. Interacts (via N-terminus) with host CIDEB (via N-terminus); this interaction seems to regulate the association of HCV particles with APOE (By similarity). Interacts with host CHKA/Choline Kinase-alpha; CHKA bridges host PI4KA and NS5A and potentiates NS5A-stimulated PI4KA activity, which then facilitates the targeting of the ternary complex to the ER for viral replication (By similarity). Interacts with host SPSB2 (via C-terminus); this interaction targets NS5A for ubiquitination and degradation (By similarity). Interacts with host RAB18; this interaction may promote the association of NS5A and other replicase components with lipid droplets (By similarity). Interacts (via region D2) with host PPIA/CYPA; the interaction stimulates RNA-binding ability of NS5A and is dependent on the peptidyl-prolyl cis-trans isomerase activity of PPIA/CYPA. Interacts with host TRIM14; this interaction induces the degradation of NS5A (By similarity).</text>
</comment>
<comment type="subunit">
    <molecule>RNA-directed RNA polymerase</molecule>
    <text evidence="6">Homooligomer (By similarity). Interacts with non-structural protein 5A (By similarity). Interacts with host VAPB (By similarity). Interacts with host PRK2/PKN2 (By similarity). Interacts with host HNRNPA1 and SEPT6; these interactions facilitate viral replication (By similarity). Part of the replication complex composed of NS2, NS3, NS4A, NS4B, NS5A and the RNA-directed RNA polymerase (By similarity).</text>
</comment>
<comment type="interaction">
    <interactant intactId="EBI-6875462">
        <id>PRO_0000037615</id>
    </interactant>
    <interactant intactId="EBI-6377335">
        <id>PRO_0000037566</id>
        <dbReference type="UniProtKB" id="P27958"/>
    </interactant>
    <organismsDiffer>true</organismsDiffer>
    <experiments>4</experiments>
</comment>
<comment type="subcellular location">
    <molecule>Core protein precursor</molecule>
    <subcellularLocation>
        <location evidence="5">Host endoplasmic reticulum membrane</location>
        <topology evidence="14">Single-pass membrane protein</topology>
    </subcellularLocation>
    <subcellularLocation>
        <location evidence="5">Host mitochondrion membrane</location>
        <topology evidence="14">Single-pass type I membrane protein</topology>
    </subcellularLocation>
    <text>The C-terminal transmembrane domain of the core protein precursor contains an ER signal leading the nascent polyprotein to the ER membrane.</text>
</comment>
<comment type="subcellular location">
    <molecule>Mature core protein</molecule>
    <subcellularLocation>
        <location evidence="12">Virion</location>
    </subcellularLocation>
    <subcellularLocation>
        <location evidence="12">Host cytoplasm</location>
    </subcellularLocation>
    <subcellularLocation>
        <location evidence="3">Host nucleus</location>
    </subcellularLocation>
    <subcellularLocation>
        <location evidence="12">Host lipid droplet</location>
    </subcellularLocation>
    <text evidence="6">Only a minor proportion of core protein is present in the nucleus (By similarity). Probably present on the surface of lipid droplets (By similarity).</text>
</comment>
<comment type="subcellular location">
    <molecule>Envelope glycoprotein E1</molecule>
    <subcellularLocation>
        <location evidence="22">Virion membrane</location>
        <topology evidence="22">Single-pass type I membrane protein</topology>
    </subcellularLocation>
    <subcellularLocation>
        <location>Host endoplasmic reticulum membrane</location>
        <topology evidence="6">Single-pass type I membrane protein</topology>
    </subcellularLocation>
    <text evidence="6">The C-terminal transmembrane domain acts as a signal sequence and forms a hairpin structure before cleavage by host signal peptidase (By similarity). After cleavage, the membrane sequence is retained at the C-terminus of the protein, serving as ER membrane anchor (By similarity). A reorientation of the second hydrophobic stretch occurs after cleavage producing a single reoriented transmembrane domain (By similarity). These events explain the final topology of the protein (By similarity).</text>
</comment>
<comment type="subcellular location">
    <molecule>Envelope glycoprotein E2</molecule>
    <subcellularLocation>
        <location evidence="22">Virion membrane</location>
        <topology evidence="22">Single-pass type I membrane protein</topology>
    </subcellularLocation>
    <subcellularLocation>
        <location>Host endoplasmic reticulum membrane</location>
        <topology evidence="6">Single-pass type I membrane protein</topology>
    </subcellularLocation>
    <subcellularLocation>
        <location evidence="13">Host lipid droplet</location>
    </subcellularLocation>
    <text evidence="6">The C-terminal transmembrane domain acts as a signal sequence and forms a hairpin structure before cleavage by host signal peptidase (By similarity). After cleavage, the membrane sequence is retained at the C-terminus of the protein, serving as ER membrane anchor (By similarity). A reorientation of the second hydrophobic stretch occurs after cleavage producing a single reoriented transmembrane domain (By similarity). These events explain the final topology of the protein (By similarity).</text>
</comment>
<comment type="subcellular location">
    <molecule>Viroporin p7</molecule>
    <subcellularLocation>
        <location evidence="6">Host endoplasmic reticulum membrane</location>
        <topology evidence="6">Multi-pass membrane protein</topology>
    </subcellularLocation>
    <subcellularLocation>
        <location evidence="6">Host mitochondrion</location>
    </subcellularLocation>
    <subcellularLocation>
        <location evidence="6">Host cell membrane</location>
    </subcellularLocation>
    <text evidence="6">The C-terminus of p7 membrane domain acts as a signal sequence (By similarity). After cleavage by host signal peptidase, the membrane sequence is retained at the C-terminus of the protein, serving as ER membrane anchor (By similarity). ER retention of p7 is leaky and a small fraction reaches the plasma membrane (By similarity).</text>
</comment>
<comment type="subcellular location">
    <molecule>Protease NS2</molecule>
    <subcellularLocation>
        <location evidence="6">Host endoplasmic reticulum membrane</location>
        <topology evidence="6">Multi-pass membrane protein</topology>
    </subcellularLocation>
    <subcellularLocation>
        <location evidence="13">Host lipid droplet</location>
    </subcellularLocation>
    <text evidence="12">Probably present on the surface of lipid droplets.</text>
</comment>
<comment type="subcellular location">
    <molecule>Serine protease/helicase NS3</molecule>
    <subcellularLocation>
        <location evidence="22">Host endoplasmic reticulum membrane</location>
        <topology evidence="22">Peripheral membrane protein</topology>
    </subcellularLocation>
    <text evidence="22">NS3 is associated to the ER membrane through its binding to NS4A.</text>
</comment>
<comment type="subcellular location">
    <molecule>Non-structural protein 4A</molecule>
    <subcellularLocation>
        <location evidence="22">Host endoplasmic reticulum membrane</location>
        <topology evidence="22">Single-pass type I membrane protein</topology>
    </subcellularLocation>
    <text>Host membrane insertion occurs after processing by the NS3 protease.</text>
</comment>
<comment type="subcellular location">
    <molecule>Non-structural protein 4B</molecule>
    <subcellularLocation>
        <location evidence="6">Host endoplasmic reticulum membrane</location>
        <topology evidence="6">Multi-pass membrane protein</topology>
    </subcellularLocation>
    <text evidence="6">A reorientation of the N-terminus into the ER lumen occurs post-translationally.</text>
</comment>
<comment type="subcellular location">
    <molecule>Non-structural protein 5A</molecule>
    <subcellularLocation>
        <location evidence="6">Host endoplasmic reticulum membrane</location>
        <topology evidence="6">Peripheral membrane protein</topology>
    </subcellularLocation>
    <subcellularLocation>
        <location evidence="6">Host cytoplasm</location>
        <location evidence="6">Host perinuclear region</location>
    </subcellularLocation>
    <subcellularLocation>
        <location evidence="3">Host mitochondrion</location>
    </subcellularLocation>
    <subcellularLocation>
        <location evidence="6">Host cytoplasm</location>
    </subcellularLocation>
    <subcellularLocation>
        <location evidence="3">Host nucleus</location>
    </subcellularLocation>
    <subcellularLocation>
        <location evidence="13">Host lipid droplet</location>
    </subcellularLocation>
    <text evidence="3 6">Host membrane insertion occurs after processing by the NS3 protease (By similarity). Localizes at the surface of lipid droplets (By similarity).</text>
</comment>
<comment type="subcellular location">
    <molecule>RNA-directed RNA polymerase</molecule>
    <subcellularLocation>
        <location evidence="6">Host cytoplasm</location>
    </subcellularLocation>
    <subcellularLocation>
        <location>Host endoplasmic reticulum membrane</location>
        <topology evidence="6">Single-pass type IV membrane protein</topology>
    </subcellularLocation>
    <text evidence="6">Host membrane insertion occurs after processing by the NS3 protease.</text>
</comment>
<comment type="domain">
    <molecule>Envelope glycoprotein E1</molecule>
    <text evidence="6">The transmembrane regions of envelope E1 and E2 glycoproteins are involved in heterodimer formation, ER localization, and assembly of these proteins.</text>
</comment>
<comment type="domain">
    <molecule>Envelope glycoprotein E2</molecule>
    <text evidence="4 6">The transmembrane regions of envelope E1 and E2 glycoproteins are involved in heterodimer formation, ER localization, and assembly of these proteins (By similarity). Envelope E2 glycoprotein contain two highly variable regions called hypervariable region 1 and 2 (HVR1 and HVR2) (By similarity). E2 also contain two segments involved in CD81-binding (By similarity). HVR1 is implicated in the SCARB1-mediated cell entry and probably acts as a regulator of the association of particles with lipids (By similarity).</text>
</comment>
<comment type="domain">
    <molecule>Protease NS2</molecule>
    <text evidence="4">The N-terminus of NS3 is required for the catalytic activity of protease NS2 (By similarity). The minimal catalytic region includes the C-terminus of NS2 and the N-terminus NS3 protease domain (active region NS2-3) (By similarity).</text>
</comment>
<comment type="domain">
    <molecule>Serine protease/helicase NS3</molecule>
    <text evidence="3 4 6">The N-terminal one-third contains the protease activity (By similarity). This region contains a zinc atom that does not belong to the active site, but may play a structural rather than a catalytic role (By similarity). This region is essential for the activity of protease NS2, maybe by contributing to the folding of the latter (By similarity). The NTPase/helicase activity is located in the twothirds C-terminus of NS3, this domain contains the NTPase and RNA-binding regions (By similarity).</text>
</comment>
<comment type="domain">
    <molecule>Non-structural protein 4B</molecule>
    <text evidence="12">Contains a glycine zipper region that critically contributes to the biogenesis of functional ER-derived replication organelles.</text>
</comment>
<comment type="domain">
    <molecule>Non-structural protein 5A</molecule>
    <text evidence="3 6">The N-terminus of NS5A acts as membrane anchor (By similarity). The central part of NS5A contains a variable region called interferon sensitivity determining region (ISDR) and seems to be intrinsically disordered and interacts with NS5B and host EIF2AK2 (By similarity). The C-terminus of NS5A contains a variable region called variable region 3 (V3) (By similarity). ISDR and V3 may be involved in sensitivity and/or resistance to IFN-alpha therapy (By similarity). The C-terminus contains a nuclear localization signal (By similarity). The SH3-binding domain is involved in the interaction with host BIN1, GRB2 and Src-family kinases (By similarity).</text>
</comment>
<comment type="PTM">
    <molecule>Genome polyprotein</molecule>
    <text evidence="5 6">Specific enzymatic cleavages in vivo yield mature proteins (By similarity). The structural proteins, core, E1, E2 and p7 are produced by proteolytic processing by host signal peptidases (By similarity). The core protein precursor is synthesized as a 23 kDa, which is retained in the ER membrane through the hydrophobic signal peptide (By similarity). Cleavage by the signal peptidase releases the 21 kDa mature core protein (By similarity). The cleavage of the core protein precursor occurs between aminoacids 176 and 188 but the exact cleavage site is not known (By similarity). Some degraded forms of the core protein appear as well during the course of infection (By similarity). The other proteins (p7, NS2, NS3, NS4A, NS4B, NS5A and NS5B) are cleaved by the viral proteases (By similarity). Autoprocessing between NS2 and NS3 is mediated by the NS2 cysteine protease catalytic domain and regulated by the NS3 N-terminal domain (By similarity).</text>
</comment>
<comment type="PTM">
    <molecule>Mature core protein</molecule>
    <text evidence="8">Phosphorylated by host PKC and PKA.</text>
</comment>
<comment type="PTM">
    <molecule>Mature core protein</molecule>
    <text evidence="9">Ubiquitinated; mediated by UBE3A and leading to core protein subsequent proteasomal degradation.</text>
</comment>
<comment type="PTM">
    <molecule>Envelope glycoprotein E1</molecule>
    <text evidence="6">Highly N-glycosylated.</text>
</comment>
<comment type="PTM">
    <molecule>Envelope glycoprotein E2</molecule>
    <text evidence="6">Highly N-glycosylated.</text>
</comment>
<comment type="PTM">
    <molecule>Protease NS2</molecule>
    <text evidence="6">Palmitoylation is required for NS2/3 autoprocessing and E2 recruitment to membranes.</text>
</comment>
<comment type="PTM">
    <molecule>Non-structural protein 4B</molecule>
    <text evidence="6">Palmitoylated. This modification may play a role in its polymerization or in protein-protein interactions.</text>
</comment>
<comment type="PTM">
    <molecule>Non-structural protein 5A</molecule>
    <text evidence="3 5">Phosphorylated on serines in a basal form termed p56 (By similarity). p58 is a hyperphosphorylated form of p56 (By similarity). p56 and p58 coexist in the cell in roughly equivalent amounts (By similarity). Hyperphosphorylation is dependent on the presence of NS4A (By similarity). Host CSNK1A1/CKI-alpha or RPS6KB1 kinases may be responsible for NS5A phosphorylation (By similarity).</text>
</comment>
<comment type="PTM">
    <molecule>Non-structural protein 5A</molecule>
    <text evidence="12">Tyrosine phosphorylation is essential for the interaction with host SRC.</text>
</comment>
<comment type="PTM">
    <molecule>RNA-directed RNA polymerase</molecule>
    <text evidence="3">The N-terminus is phosphorylated by host PRK2/PKN2.</text>
</comment>
<comment type="miscellaneous">
    <text evidence="22">Viral particle assembly takes place at the surface of ER-derived membranes in close proximity to lipid droplets. NS2 associates with E1/E2 glycoproteins, NS3 and NS5A, which interacts with the viral RNA and core protein to promote genome encapsidation. The nucleocapsid buds at the ER membrane where E1/E2 glycoproteins are anchored and afterward associate with nascent lipid droplet to acquire APOE and APOC. Secretion of viral particles is probably regulated by viroporin p7.</text>
</comment>
<comment type="miscellaneous">
    <molecule>Non-structural protein 5A</molecule>
    <text evidence="22">Cell culture adaptation of the virus leads to mutations in NS5A, reducing its inhibitory effect on replication.</text>
</comment>
<comment type="miscellaneous">
    <molecule>Mature core protein</molecule>
    <text evidence="3">Exerts viral interference on hepatitis B virus when HCV and HBV coinfect the same cell, by suppressing HBV gene expression, RNA encapsidation and budding.</text>
</comment>
<comment type="similarity">
    <text evidence="22">Belongs to the hepacivirus polyprotein family.</text>
</comment>
<comment type="caution">
    <text evidence="22">The core gene probably also codes for alternative reading frame proteins (ARFPs). Many functions depicted for the core protein might belong to the ARFPs.</text>
</comment>
<name>POLG_HCVJ6</name>
<evidence type="ECO:0000250" key="1"/>
<evidence type="ECO:0000250" key="2">
    <source>
        <dbReference type="UniProtKB" id="O92972"/>
    </source>
</evidence>
<evidence type="ECO:0000250" key="3">
    <source>
        <dbReference type="UniProtKB" id="P26662"/>
    </source>
</evidence>
<evidence type="ECO:0000250" key="4">
    <source>
        <dbReference type="UniProtKB" id="P26663"/>
    </source>
</evidence>
<evidence type="ECO:0000250" key="5">
    <source>
        <dbReference type="UniProtKB" id="P26664"/>
    </source>
</evidence>
<evidence type="ECO:0000250" key="6">
    <source>
        <dbReference type="UniProtKB" id="P27958"/>
    </source>
</evidence>
<evidence type="ECO:0000250" key="7">
    <source>
        <dbReference type="UniProtKB" id="P29846"/>
    </source>
</evidence>
<evidence type="ECO:0000250" key="8">
    <source>
        <dbReference type="UniProtKB" id="Q01403"/>
    </source>
</evidence>
<evidence type="ECO:0000250" key="9">
    <source>
        <dbReference type="UniProtKB" id="Q03463"/>
    </source>
</evidence>
<evidence type="ECO:0000250" key="10">
    <source>
        <dbReference type="UniProtKB" id="Q5EG65"/>
    </source>
</evidence>
<evidence type="ECO:0000250" key="11">
    <source>
        <dbReference type="UniProtKB" id="Q913V3"/>
    </source>
</evidence>
<evidence type="ECO:0000250" key="12">
    <source>
        <dbReference type="UniProtKB" id="Q99IB8"/>
    </source>
</evidence>
<evidence type="ECO:0000250" key="13">
    <source>
        <dbReference type="UniProtKB" id="Q9WMX2"/>
    </source>
</evidence>
<evidence type="ECO:0000255" key="14"/>
<evidence type="ECO:0000255" key="15">
    <source>
        <dbReference type="PROSITE-ProRule" id="PRU00539"/>
    </source>
</evidence>
<evidence type="ECO:0000255" key="16">
    <source>
        <dbReference type="PROSITE-ProRule" id="PRU00541"/>
    </source>
</evidence>
<evidence type="ECO:0000255" key="17">
    <source>
        <dbReference type="PROSITE-ProRule" id="PRU01030"/>
    </source>
</evidence>
<evidence type="ECO:0000255" key="18">
    <source>
        <dbReference type="PROSITE-ProRule" id="PRU01166"/>
    </source>
</evidence>
<evidence type="ECO:0000256" key="19">
    <source>
        <dbReference type="SAM" id="MobiDB-lite"/>
    </source>
</evidence>
<evidence type="ECO:0000269" key="20">
    <source>
    </source>
</evidence>
<evidence type="ECO:0000269" key="21">
    <source>
    </source>
</evidence>
<evidence type="ECO:0000305" key="22"/>
<evidence type="ECO:0007744" key="23">
    <source>
        <dbReference type="PDB" id="2XWH"/>
    </source>
</evidence>
<evidence type="ECO:0007744" key="24">
    <source>
        <dbReference type="PDB" id="4ADP"/>
    </source>
</evidence>
<evidence type="ECO:0007829" key="25">
    <source>
        <dbReference type="PDB" id="1YUY"/>
    </source>
</evidence>
<evidence type="ECO:0007829" key="26">
    <source>
        <dbReference type="PDB" id="2XWH"/>
    </source>
</evidence>
<evidence type="ECO:0007829" key="27">
    <source>
        <dbReference type="PDB" id="4ADP"/>
    </source>
</evidence>
<keyword id="KW-0002">3D-structure</keyword>
<keyword id="KW-0007">Acetylation</keyword>
<keyword id="KW-1072">Activation of host autophagy by virus</keyword>
<keyword id="KW-0053">Apoptosis</keyword>
<keyword id="KW-0067">ATP-binding</keyword>
<keyword id="KW-0167">Capsid protein</keyword>
<keyword id="KW-1165">Clathrin-mediated endocytosis of virus by host</keyword>
<keyword id="KW-1015">Disulfide bond</keyword>
<keyword id="KW-1170">Fusion of virus membrane with host endosomal membrane</keyword>
<keyword id="KW-1168">Fusion of virus membrane with host membrane</keyword>
<keyword id="KW-1078">G1/S host cell cycle checkpoint dysregulation by virus</keyword>
<keyword id="KW-0325">Glycoprotein</keyword>
<keyword id="KW-0347">Helicase</keyword>
<keyword id="KW-1032">Host cell membrane</keyword>
<keyword id="KW-1035">Host cytoplasm</keyword>
<keyword id="KW-1038">Host endoplasmic reticulum</keyword>
<keyword id="KW-1041">Host lipid droplet</keyword>
<keyword id="KW-1043">Host membrane</keyword>
<keyword id="KW-1045">Host mitochondrion</keyword>
<keyword id="KW-1048">Host nucleus</keyword>
<keyword id="KW-0945">Host-virus interaction</keyword>
<keyword id="KW-0378">Hydrolase</keyword>
<keyword id="KW-1090">Inhibition of host innate immune response by virus</keyword>
<keyword id="KW-1114">Inhibition of host interferon signaling pathway by virus</keyword>
<keyword id="KW-1097">Inhibition of host MAVS by virus</keyword>
<keyword id="KW-1113">Inhibition of host RLR pathway by virus</keyword>
<keyword id="KW-1105">Inhibition of host STAT1 by virus</keyword>
<keyword id="KW-1110">Inhibition of host TRAFs by virus</keyword>
<keyword id="KW-0922">Interferon antiviral system evasion</keyword>
<keyword id="KW-0407">Ion channel</keyword>
<keyword id="KW-0406">Ion transport</keyword>
<keyword id="KW-1017">Isopeptide bond</keyword>
<keyword id="KW-0449">Lipoprotein</keyword>
<keyword id="KW-0460">Magnesium</keyword>
<keyword id="KW-0472">Membrane</keyword>
<keyword id="KW-0479">Metal-binding</keyword>
<keyword id="KW-1121">Modulation of host cell cycle by virus</keyword>
<keyword id="KW-0511">Multifunctional enzyme</keyword>
<keyword id="KW-0547">Nucleotide-binding</keyword>
<keyword id="KW-0548">Nucleotidyltransferase</keyword>
<keyword id="KW-0553">Oncogene</keyword>
<keyword id="KW-0564">Palmitate</keyword>
<keyword id="KW-0597">Phosphoprotein</keyword>
<keyword id="KW-0645">Protease</keyword>
<keyword id="KW-0687">Ribonucleoprotein</keyword>
<keyword id="KW-0694">RNA-binding</keyword>
<keyword id="KW-0696">RNA-directed RNA polymerase</keyword>
<keyword id="KW-0720">Serine protease</keyword>
<keyword id="KW-0788">Thiol protease</keyword>
<keyword id="KW-0804">Transcription</keyword>
<keyword id="KW-0805">Transcription regulation</keyword>
<keyword id="KW-0808">Transferase</keyword>
<keyword id="KW-0812">Transmembrane</keyword>
<keyword id="KW-1133">Transmembrane helix</keyword>
<keyword id="KW-0813">Transport</keyword>
<keyword id="KW-0832">Ubl conjugation</keyword>
<keyword id="KW-1161">Viral attachment to host cell</keyword>
<keyword id="KW-0261">Viral envelope protein</keyword>
<keyword id="KW-0899">Viral immunoevasion</keyword>
<keyword id="KW-1182">Viral ion channel</keyword>
<keyword id="KW-0543">Viral nucleoprotein</keyword>
<keyword id="KW-1162">Viral penetration into host cytoplasm</keyword>
<keyword id="KW-0693">Viral RNA replication</keyword>
<keyword id="KW-0946">Virion</keyword>
<keyword id="KW-1164">Virus endocytosis by host</keyword>
<keyword id="KW-1160">Virus entry into host cell</keyword>
<keyword id="KW-0862">Zinc</keyword>
<organismHost>
    <name type="scientific">Homo sapiens</name>
    <name type="common">Human</name>
    <dbReference type="NCBI Taxonomy" id="9606"/>
</organismHost>
<protein>
    <recommendedName>
        <fullName>Genome polyprotein</fullName>
    </recommendedName>
    <component>
        <recommendedName>
            <fullName>Core protein precursor</fullName>
        </recommendedName>
        <alternativeName>
            <fullName>Capsid protein C</fullName>
        </alternativeName>
        <alternativeName>
            <fullName>p23</fullName>
        </alternativeName>
    </component>
    <component>
        <recommendedName>
            <fullName>Mature core protein</fullName>
        </recommendedName>
        <alternativeName>
            <fullName>p21</fullName>
        </alternativeName>
    </component>
    <component>
        <recommendedName>
            <fullName>Envelope glycoprotein E1</fullName>
        </recommendedName>
        <alternativeName>
            <fullName>gp32</fullName>
        </alternativeName>
        <alternativeName>
            <fullName>gp35</fullName>
        </alternativeName>
    </component>
    <component>
        <recommendedName>
            <fullName>Envelope glycoprotein E2</fullName>
        </recommendedName>
        <alternativeName>
            <fullName>NS1</fullName>
        </alternativeName>
        <alternativeName>
            <fullName>gp68</fullName>
        </alternativeName>
        <alternativeName>
            <fullName>gp70</fullName>
        </alternativeName>
    </component>
    <component>
        <recommendedName>
            <fullName>Viroporin p7</fullName>
        </recommendedName>
    </component>
    <component>
        <recommendedName>
            <fullName>Protease NS2</fullName>
            <shortName>p23</shortName>
            <ecNumber evidence="4">3.4.22.-</ecNumber>
        </recommendedName>
        <alternativeName>
            <fullName>Non-structural protein 2</fullName>
            <shortName>NS2</shortName>
        </alternativeName>
    </component>
    <component>
        <recommendedName>
            <fullName>Serine protease/helicase NS3</fullName>
            <ecNumber evidence="6">3.4.21.98</ecNumber>
            <ecNumber evidence="6">3.6.1.15</ecNumber>
            <ecNumber evidence="6">3.6.4.13</ecNumber>
        </recommendedName>
        <alternativeName>
            <fullName>Hepacivirin</fullName>
        </alternativeName>
        <alternativeName>
            <fullName evidence="6">NS3 helicase</fullName>
        </alternativeName>
        <alternativeName>
            <fullName evidence="6">NS3 protease</fullName>
        </alternativeName>
        <alternativeName>
            <fullName>NS3P</fullName>
        </alternativeName>
        <alternativeName>
            <fullName>Viroporin p70</fullName>
        </alternativeName>
    </component>
    <component>
        <recommendedName>
            <fullName>Non-structural protein 4A</fullName>
            <shortName>NS4A</shortName>
        </recommendedName>
        <alternativeName>
            <fullName>p8</fullName>
        </alternativeName>
    </component>
    <component>
        <recommendedName>
            <fullName>Non-structural protein 4B</fullName>
            <shortName>NS4B</shortName>
        </recommendedName>
        <alternativeName>
            <fullName>p27</fullName>
        </alternativeName>
    </component>
    <component>
        <recommendedName>
            <fullName>Non-structural protein 5A</fullName>
            <shortName>NS5A</shortName>
        </recommendedName>
        <alternativeName>
            <fullName>p56/58</fullName>
        </alternativeName>
    </component>
    <component>
        <recommendedName>
            <fullName>RNA-directed RNA polymerase</fullName>
            <ecNumber evidence="20">2.7.7.48</ecNumber>
        </recommendedName>
        <alternativeName>
            <fullName>NS5B</fullName>
        </alternativeName>
        <alternativeName>
            <fullName>p68</fullName>
        </alternativeName>
    </component>
</protein>
<organism>
    <name type="scientific">Hepatitis C virus genotype 2a (isolate HC-J6)</name>
    <name type="common">HCV</name>
    <dbReference type="NCBI Taxonomy" id="11113"/>
    <lineage>
        <taxon>Viruses</taxon>
        <taxon>Riboviria</taxon>
        <taxon>Orthornavirae</taxon>
        <taxon>Kitrinoviricota</taxon>
        <taxon>Flasuviricetes</taxon>
        <taxon>Amarillovirales</taxon>
        <taxon>Flaviviridae</taxon>
        <taxon>Hepacivirus</taxon>
        <taxon>Hepacivirus hominis</taxon>
    </lineage>
</organism>
<feature type="initiator methionine" description="Removed; by host" evidence="5">
    <location>
        <position position="1"/>
    </location>
</feature>
<feature type="chain" id="PRO_0000450914" description="Genome polyprotein">
    <location>
        <begin position="2"/>
        <end position="3033"/>
    </location>
</feature>
<feature type="chain" id="PRO_0000037608" description="Core protein precursor">
    <location>
        <begin position="2"/>
        <end position="191"/>
    </location>
</feature>
<feature type="chain" id="PRO_0000037609" description="Mature core protein">
    <location>
        <begin position="2"/>
        <end position="177"/>
    </location>
</feature>
<feature type="propeptide" id="PRO_0000037610" description="ER anchor for the core protein, removed in mature form by host signal peptidase">
    <location>
        <begin position="178"/>
        <end position="191"/>
    </location>
</feature>
<feature type="chain" id="PRO_0000037611" description="Envelope glycoprotein E1">
    <location>
        <begin position="192"/>
        <end position="383"/>
    </location>
</feature>
<feature type="chain" id="PRO_0000037612" description="Envelope glycoprotein E2">
    <location>
        <begin position="384"/>
        <end position="750"/>
    </location>
</feature>
<feature type="chain" id="PRO_0000037613" description="Viroporin p7">
    <location>
        <begin position="751"/>
        <end position="813"/>
    </location>
</feature>
<feature type="chain" id="PRO_0000037614" description="Protease NS2" evidence="17">
    <location>
        <begin position="814"/>
        <end position="1030"/>
    </location>
</feature>
<feature type="chain" id="PRO_0000037615" description="Serine protease/helicase NS3">
    <location>
        <begin position="1031"/>
        <end position="1661"/>
    </location>
</feature>
<feature type="chain" id="PRO_0000037616" description="Non-structural protein 4A">
    <location>
        <begin position="1662"/>
        <end position="1715"/>
    </location>
</feature>
<feature type="chain" id="PRO_0000037617" description="Non-structural protein 4B">
    <location>
        <begin position="1716"/>
        <end position="1976"/>
    </location>
</feature>
<feature type="chain" id="PRO_0000037618" description="Non-structural protein 5A">
    <location>
        <begin position="1977"/>
        <end position="2442"/>
    </location>
</feature>
<feature type="chain" id="PRO_0000037619" description="RNA-directed RNA polymerase">
    <location>
        <begin position="2443"/>
        <end position="3033"/>
    </location>
</feature>
<feature type="topological domain" description="Cytoplasmic" evidence="14">
    <location>
        <begin position="2"/>
        <end position="168"/>
    </location>
</feature>
<feature type="transmembrane region" description="Helical" evidence="14">
    <location>
        <begin position="169"/>
        <end position="189"/>
    </location>
</feature>
<feature type="topological domain" description="Lumenal" evidence="6">
    <location>
        <begin position="190"/>
        <end position="358"/>
    </location>
</feature>
<feature type="transmembrane region" description="Helical" evidence="6">
    <location>
        <begin position="359"/>
        <end position="379"/>
    </location>
</feature>
<feature type="topological domain" description="Lumenal" evidence="6">
    <location>
        <begin position="380"/>
        <end position="729"/>
    </location>
</feature>
<feature type="transmembrane region" description="Helical" evidence="6">
    <location>
        <begin position="730"/>
        <end position="750"/>
    </location>
</feature>
<feature type="topological domain" description="Lumenal" evidence="6">
    <location>
        <begin position="751"/>
        <end position="761"/>
    </location>
</feature>
<feature type="transmembrane region" description="Helical" evidence="6">
    <location>
        <begin position="762"/>
        <end position="782"/>
    </location>
</feature>
<feature type="topological domain" description="Cytoplasmic" evidence="6">
    <location>
        <begin position="783"/>
        <end position="786"/>
    </location>
</feature>
<feature type="transmembrane region" description="Helical" evidence="6">
    <location>
        <begin position="787"/>
        <end position="807"/>
    </location>
</feature>
<feature type="topological domain" description="Lumenal" evidence="6">
    <location>
        <begin position="808"/>
        <end position="817"/>
    </location>
</feature>
<feature type="transmembrane region" description="Helical" evidence="13">
    <location>
        <begin position="818"/>
        <end position="838"/>
    </location>
</feature>
<feature type="topological domain" description="Cytoplasmic" evidence="13">
    <location>
        <begin position="839"/>
        <end position="885"/>
    </location>
</feature>
<feature type="transmembrane region" description="Helical" evidence="13">
    <location>
        <begin position="886"/>
        <end position="906"/>
    </location>
</feature>
<feature type="topological domain" description="Lumenal" evidence="13">
    <location>
        <begin position="907"/>
        <end position="932"/>
    </location>
</feature>
<feature type="transmembrane region" description="Helical" evidence="13">
    <location>
        <begin position="933"/>
        <end position="953"/>
    </location>
</feature>
<feature type="topological domain" description="Cytoplasmic" evidence="13">
    <location>
        <begin position="954"/>
        <end position="1661"/>
    </location>
</feature>
<feature type="transmembrane region" description="Helical" evidence="14">
    <location>
        <begin position="1662"/>
        <end position="1682"/>
    </location>
</feature>
<feature type="topological domain" description="Cytoplasmic" evidence="14">
    <location>
        <begin position="1683"/>
        <end position="1809"/>
    </location>
</feature>
<feature type="transmembrane region" description="Helical" evidence="14">
    <location>
        <begin position="1810"/>
        <end position="1830"/>
    </location>
</feature>
<feature type="topological domain" description="Lumenal" evidence="6">
    <location>
        <begin position="1831"/>
        <end position="1832"/>
    </location>
</feature>
<feature type="transmembrane region" description="Helical" evidence="14">
    <location>
        <begin position="1833"/>
        <end position="1853"/>
    </location>
</feature>
<feature type="topological domain" description="Cytoplasmic" evidence="14">
    <location>
        <position position="1854"/>
    </location>
</feature>
<feature type="transmembrane region" description="Helical" evidence="14">
    <location>
        <begin position="1855"/>
        <end position="1875"/>
    </location>
</feature>
<feature type="topological domain" description="Lumenal" evidence="14">
    <location>
        <begin position="1876"/>
        <end position="1885"/>
    </location>
</feature>
<feature type="transmembrane region" description="Helical" evidence="14">
    <location>
        <begin position="1886"/>
        <end position="1906"/>
    </location>
</feature>
<feature type="topological domain" description="Cytoplasmic" evidence="14">
    <location>
        <begin position="1907"/>
        <end position="1976"/>
    </location>
</feature>
<feature type="intramembrane region" evidence="6">
    <location>
        <begin position="1977"/>
        <end position="2007"/>
    </location>
</feature>
<feature type="topological domain" description="Cytoplasmic" evidence="6">
    <location>
        <begin position="2008"/>
        <end position="3012"/>
    </location>
</feature>
<feature type="transmembrane region" description="Helical" evidence="6">
    <location>
        <begin position="3013"/>
        <end position="3033"/>
    </location>
</feature>
<feature type="domain" description="Peptidase C18" evidence="17">
    <location>
        <begin position="907"/>
        <end position="1030"/>
    </location>
</feature>
<feature type="domain" description="Peptidase S29" evidence="18">
    <location>
        <begin position="1031"/>
        <end position="1212"/>
    </location>
</feature>
<feature type="domain" description="Helicase ATP-binding" evidence="16">
    <location>
        <begin position="1221"/>
        <end position="1373"/>
    </location>
</feature>
<feature type="domain" description="RdRp catalytic" evidence="15">
    <location>
        <begin position="2656"/>
        <end position="2774"/>
    </location>
</feature>
<feature type="region of interest" description="Disordered" evidence="6">
    <location>
        <begin position="2"/>
        <end position="75"/>
    </location>
</feature>
<feature type="region of interest" description="Interaction with DDX3X" evidence="10">
    <location>
        <begin position="2"/>
        <end position="59"/>
    </location>
</feature>
<feature type="region of interest" description="Interaction with EIF2AK2/PKR" evidence="3">
    <location>
        <begin position="2"/>
        <end position="58"/>
    </location>
</feature>
<feature type="region of interest" description="Interaction with STAT1" evidence="3">
    <location>
        <begin position="2"/>
        <end position="23"/>
    </location>
</feature>
<feature type="region of interest" description="Important for endoplasmic reticulum and mitochondrial localization" evidence="3">
    <location>
        <begin position="112"/>
        <end position="152"/>
    </location>
</feature>
<feature type="region of interest" description="Interaction with APOA2" evidence="7">
    <location>
        <begin position="122"/>
        <end position="173"/>
    </location>
</feature>
<feature type="region of interest" description="Important for lipid droplets localization" evidence="6">
    <location>
        <begin position="164"/>
        <end position="167"/>
    </location>
</feature>
<feature type="region of interest" description="Important for fusion" evidence="6">
    <location>
        <begin position="265"/>
        <end position="296"/>
    </location>
</feature>
<feature type="region of interest" description="HVR1" evidence="6">
    <location>
        <begin position="385"/>
        <end position="411"/>
    </location>
</feature>
<feature type="region of interest" description="CD81-binding 1" evidence="4">
    <location>
        <begin position="484"/>
        <end position="496"/>
    </location>
</feature>
<feature type="region of interest" description="CD81-binding 2" evidence="4">
    <location>
        <begin position="524"/>
        <end position="555"/>
    </location>
</feature>
<feature type="region of interest" description="EIF2AK2/eIF2-alpha phosphorylation homology domain (PePHD)">
    <location>
        <begin position="664"/>
        <end position="675"/>
    </location>
</feature>
<feature type="region of interest" description="Protease NS2-3" evidence="4">
    <location>
        <begin position="908"/>
        <end position="1210"/>
    </location>
</feature>
<feature type="region of interest" description="Interaction with host SCPS1" evidence="12">
    <location>
        <begin position="933"/>
        <end position="953"/>
    </location>
</feature>
<feature type="region of interest" description="RNA-binding" evidence="4">
    <location>
        <begin position="1490"/>
        <end position="1501"/>
    </location>
</feature>
<feature type="region of interest" description="NS3-binding" evidence="6">
    <location>
        <begin position="1683"/>
        <end position="1694"/>
    </location>
</feature>
<feature type="region of interest" description="Glycine zipper" evidence="12">
    <location>
        <begin position="1837"/>
        <end position="1865"/>
    </location>
</feature>
<feature type="region of interest" description="Membrane-binding" evidence="6">
    <location>
        <begin position="1982"/>
        <end position="2002"/>
    </location>
</feature>
<feature type="region of interest" description="RNA-binding" evidence="6">
    <location>
        <begin position="2009"/>
        <end position="2225"/>
    </location>
</feature>
<feature type="region of interest" description="Transcriptional activation" evidence="14">
    <location>
        <begin position="2124"/>
        <end position="2332"/>
    </location>
</feature>
<feature type="region of interest" description="FKBP8-binding" evidence="3">
    <location>
        <begin position="2124"/>
        <end position="2212"/>
    </location>
</feature>
<feature type="region of interest" description="Interaction with non-structural protein 4A" evidence="3">
    <location>
        <begin position="2139"/>
        <end position="2143"/>
    </location>
</feature>
<feature type="region of interest" description="Disordered" evidence="19">
    <location>
        <begin position="2193"/>
        <end position="2214"/>
    </location>
</feature>
<feature type="region of interest" description="ISDR" evidence="3">
    <location>
        <begin position="2210"/>
        <end position="2249"/>
    </location>
</feature>
<feature type="region of interest" description="Interaction with EIF2AK2/PKR" evidence="4">
    <location>
        <begin position="2214"/>
        <end position="2275"/>
    </location>
</feature>
<feature type="region of interest" description="NS4B-binding" evidence="14">
    <location>
        <begin position="2253"/>
        <end position="2310"/>
    </location>
</feature>
<feature type="region of interest" description="Disordered" evidence="19">
    <location>
        <begin position="2309"/>
        <end position="2335"/>
    </location>
</feature>
<feature type="region of interest" description="Interaction with host IFI27" evidence="6">
    <location>
        <begin position="2336"/>
        <end position="2447"/>
    </location>
</feature>
<feature type="region of interest" description="Disordered" evidence="19">
    <location>
        <begin position="2351"/>
        <end position="2431"/>
    </location>
</feature>
<feature type="region of interest" description="V3">
    <location>
        <begin position="2358"/>
        <end position="2381"/>
    </location>
</feature>
<feature type="short sequence motif" description="Nuclear localization signal" evidence="12">
    <location>
        <begin position="5"/>
        <end position="13"/>
    </location>
</feature>
<feature type="short sequence motif" description="Nuclear localization signal" evidence="12">
    <location>
        <begin position="38"/>
        <end position="43"/>
    </location>
</feature>
<feature type="short sequence motif" description="Nuclear localization signal" evidence="12">
    <location>
        <begin position="58"/>
        <end position="64"/>
    </location>
</feature>
<feature type="short sequence motif" description="Nuclear localization signal" evidence="12">
    <location>
        <begin position="66"/>
        <end position="71"/>
    </location>
</feature>
<feature type="short sequence motif" description="DECH box" evidence="12">
    <location>
        <begin position="1320"/>
        <end position="1323"/>
    </location>
</feature>
<feature type="short sequence motif" description="SH3-binding" evidence="14">
    <location>
        <begin position="2322"/>
        <end position="2325"/>
    </location>
</feature>
<feature type="short sequence motif" description="Nuclear localization signal" evidence="3">
    <location>
        <begin position="2326"/>
        <end position="2334"/>
    </location>
</feature>
<feature type="compositionally biased region" description="Basic residues" evidence="19">
    <location>
        <begin position="7"/>
        <end position="16"/>
    </location>
</feature>
<feature type="compositionally biased region" description="Low complexity" evidence="19">
    <location>
        <begin position="32"/>
        <end position="47"/>
    </location>
</feature>
<feature type="compositionally biased region" description="Low complexity" evidence="19">
    <location>
        <begin position="2198"/>
        <end position="2214"/>
    </location>
</feature>
<feature type="compositionally biased region" description="Pro residues" evidence="19">
    <location>
        <begin position="2316"/>
        <end position="2326"/>
    </location>
</feature>
<feature type="compositionally biased region" description="Acidic residues" evidence="19">
    <location>
        <begin position="2398"/>
        <end position="2408"/>
    </location>
</feature>
<feature type="compositionally biased region" description="Low complexity" evidence="19">
    <location>
        <begin position="2417"/>
        <end position="2431"/>
    </location>
</feature>
<feature type="active site" description="For protease NS2 activity; shared with dimeric partner" evidence="17">
    <location>
        <position position="956"/>
    </location>
</feature>
<feature type="active site" description="For protease NS2 activity; shared with dimeric partner" evidence="17">
    <location>
        <position position="976"/>
    </location>
</feature>
<feature type="active site" description="For protease NS2 activity; shared with dimeric partner" evidence="17">
    <location>
        <position position="997"/>
    </location>
</feature>
<feature type="active site" description="Charge relay system; for serine protease NS3 activity" evidence="18">
    <location>
        <position position="1087"/>
    </location>
</feature>
<feature type="active site" description="Charge relay system; for serine protease NS3 activity" evidence="18">
    <location>
        <position position="1111"/>
    </location>
</feature>
<feature type="active site" description="Charge relay system; for serine protease NS3 activity" evidence="18">
    <location>
        <position position="1169"/>
    </location>
</feature>
<feature type="binding site" evidence="18">
    <location>
        <position position="1127"/>
    </location>
    <ligand>
        <name>Zn(2+)</name>
        <dbReference type="ChEBI" id="CHEBI:29105"/>
        <label>1</label>
        <note>structural</note>
    </ligand>
</feature>
<feature type="binding site" evidence="18">
    <location>
        <position position="1129"/>
    </location>
    <ligand>
        <name>Zn(2+)</name>
        <dbReference type="ChEBI" id="CHEBI:29105"/>
        <label>1</label>
        <note>structural</note>
    </ligand>
</feature>
<feature type="binding site" evidence="18">
    <location>
        <position position="1175"/>
    </location>
    <ligand>
        <name>Zn(2+)</name>
        <dbReference type="ChEBI" id="CHEBI:29105"/>
        <label>1</label>
        <note>structural</note>
    </ligand>
</feature>
<feature type="binding site" evidence="18">
    <location>
        <position position="1179"/>
    </location>
    <ligand>
        <name>Zn(2+)</name>
        <dbReference type="ChEBI" id="CHEBI:29105"/>
        <label>1</label>
        <note>structural</note>
    </ligand>
</feature>
<feature type="binding site" evidence="16">
    <location>
        <begin position="1234"/>
        <end position="1241"/>
    </location>
    <ligand>
        <name>ATP</name>
        <dbReference type="ChEBI" id="CHEBI:30616"/>
    </ligand>
</feature>
<feature type="binding site" evidence="13">
    <location>
        <position position="1241"/>
    </location>
    <ligand>
        <name>Mg(2+)</name>
        <dbReference type="ChEBI" id="CHEBI:18420"/>
        <label>1</label>
        <note>catalytic; for NS3 helicase activity</note>
    </ligand>
</feature>
<feature type="binding site" evidence="12">
    <location>
        <position position="1321"/>
    </location>
    <ligand>
        <name>Mg(2+)</name>
        <dbReference type="ChEBI" id="CHEBI:18420"/>
        <label>1</label>
        <note>catalytic; for NS3 helicase activity</note>
    </ligand>
</feature>
<feature type="binding site" evidence="13">
    <location>
        <position position="2015"/>
    </location>
    <ligand>
        <name>Zn(2+)</name>
        <dbReference type="ChEBI" id="CHEBI:29105"/>
        <label>2</label>
        <note>structural</note>
    </ligand>
</feature>
<feature type="binding site" evidence="13">
    <location>
        <position position="2033"/>
    </location>
    <ligand>
        <name>Zn(2+)</name>
        <dbReference type="ChEBI" id="CHEBI:29105"/>
        <label>2</label>
        <note>structural</note>
    </ligand>
</feature>
<feature type="binding site" evidence="13">
    <location>
        <position position="2035"/>
    </location>
    <ligand>
        <name>Zn(2+)</name>
        <dbReference type="ChEBI" id="CHEBI:29105"/>
        <label>2</label>
        <note>structural</note>
    </ligand>
</feature>
<feature type="binding site" evidence="13">
    <location>
        <position position="2056"/>
    </location>
    <ligand>
        <name>Zn(2+)</name>
        <dbReference type="ChEBI" id="CHEBI:29105"/>
        <label>2</label>
        <note>structural</note>
    </ligand>
</feature>
<feature type="binding site" evidence="4">
    <location>
        <position position="2662"/>
    </location>
    <ligand>
        <name>Mg(2+)</name>
        <dbReference type="ChEBI" id="CHEBI:18420"/>
        <label>2</label>
        <note>catalytic; for RNA-directed RNA polymerase activity</note>
    </ligand>
</feature>
<feature type="binding site" evidence="4">
    <location>
        <position position="2760"/>
    </location>
    <ligand>
        <name>Mg(2+)</name>
        <dbReference type="ChEBI" id="CHEBI:18420"/>
        <label>2</label>
        <note>catalytic; for RNA-directed RNA polymerase activity</note>
    </ligand>
</feature>
<feature type="binding site" evidence="4">
    <location>
        <position position="2761"/>
    </location>
    <ligand>
        <name>Mg(2+)</name>
        <dbReference type="ChEBI" id="CHEBI:18420"/>
        <label>2</label>
        <note>catalytic; for RNA-directed RNA polymerase activity</note>
    </ligand>
</feature>
<feature type="site" description="Cleavage; by host signal peptide peptidase" evidence="3">
    <location>
        <begin position="177"/>
        <end position="178"/>
    </location>
</feature>
<feature type="site" description="Cleavage; by host signal peptidase" evidence="3">
    <location>
        <begin position="191"/>
        <end position="192"/>
    </location>
</feature>
<feature type="site" description="Cleavage; by host signal peptidase" evidence="3">
    <location>
        <begin position="383"/>
        <end position="384"/>
    </location>
</feature>
<feature type="site" description="Cleavage; by host signal peptidase" evidence="1">
    <location>
        <begin position="750"/>
        <end position="751"/>
    </location>
</feature>
<feature type="site" description="Cleavage; by host signal peptidase" evidence="1">
    <location>
        <begin position="813"/>
        <end position="814"/>
    </location>
</feature>
<feature type="site" description="Cleavage; by protease NS2" evidence="17">
    <location>
        <begin position="1030"/>
        <end position="1031"/>
    </location>
</feature>
<feature type="site" description="Cleavage; by serine protease/helicase NS3" evidence="6">
    <location>
        <begin position="1661"/>
        <end position="1662"/>
    </location>
</feature>
<feature type="site" description="Cleavage; by serine protease/helicase NS3" evidence="6">
    <location>
        <begin position="1715"/>
        <end position="1716"/>
    </location>
</feature>
<feature type="site" description="Cleavage; by serine protease/helicase NS3" evidence="6">
    <location>
        <begin position="1976"/>
        <end position="1977"/>
    </location>
</feature>
<feature type="site" description="Cleavage; by serine protease/helicase NS3" evidence="6">
    <location>
        <begin position="2442"/>
        <end position="2443"/>
    </location>
</feature>
<feature type="modified residue" description="N-acetylserine; by host" evidence="11">
    <location>
        <position position="2"/>
    </location>
</feature>
<feature type="modified residue" description="Phosphoserine; by host" evidence="8">
    <location>
        <position position="53"/>
    </location>
</feature>
<feature type="modified residue" description="Phosphoserine; by host" evidence="8">
    <location>
        <position position="99"/>
    </location>
</feature>
<feature type="modified residue" description="Phosphoserine; by host PKA" evidence="8">
    <location>
        <position position="116"/>
    </location>
</feature>
<feature type="modified residue" description="Phosphotyrosine; by host" evidence="12">
    <location>
        <position position="2069"/>
    </location>
</feature>
<feature type="modified residue" description="Phosphoserine; by host; in p56" evidence="12">
    <location>
        <position position="2198"/>
    </location>
</feature>
<feature type="modified residue" description="Phosphoserine; by host; in p58" evidence="3">
    <location>
        <position position="2201"/>
    </location>
</feature>
<feature type="modified residue" description="Phosphoserine; by host; in p56 and p58, regulates intracellular NS5A distribution" evidence="12">
    <location>
        <position position="2205"/>
    </location>
</feature>
<feature type="modified residue" description="Phosphoserine; by host; in p58" evidence="12">
    <location>
        <position position="2208"/>
    </location>
</feature>
<feature type="modified residue" description="Phosphoserine; by host; in p58" evidence="12">
    <location>
        <position position="2211"/>
    </location>
</feature>
<feature type="modified residue" description="Phosphoserine; by host; in p58" evidence="12">
    <location>
        <position position="2214"/>
    </location>
</feature>
<feature type="modified residue" description="Phosphothreonine; by host" evidence="12">
    <location>
        <position position="2324"/>
    </location>
</feature>
<feature type="lipid moiety-binding region" description="S-palmitoyl cysteine; by host" evidence="6">
    <location>
        <position position="926"/>
    </location>
</feature>
<feature type="lipid moiety-binding region" description="S-palmitoyl cysteine; by host" evidence="6">
    <location>
        <position position="1972"/>
    </location>
</feature>
<feature type="lipid moiety-binding region" description="S-palmitoyl cysteine; by host; partial" evidence="6">
    <location>
        <position position="1976"/>
    </location>
</feature>
<feature type="glycosylation site" description="N-linked (GlcNAc...) asparagine; by host" evidence="6">
    <location>
        <position position="196"/>
    </location>
</feature>
<feature type="glycosylation site" description="N-linked (GlcNAc...) asparagine; by host" evidence="6">
    <location>
        <position position="209"/>
    </location>
</feature>
<feature type="glycosylation site" description="N-linked (GlcNAc...) asparagine; by host" evidence="6">
    <location>
        <position position="234"/>
    </location>
</feature>
<feature type="glycosylation site" description="N-linked (GlcNAc...) asparagine; by host" evidence="6">
    <location>
        <position position="305"/>
    </location>
</feature>
<feature type="glycosylation site" description="N-linked (GlcNAc...) (high mannose) asparagine; by host" evidence="6">
    <location>
        <position position="417"/>
    </location>
</feature>
<feature type="glycosylation site" description="N-linked (GlcNAc...) (high mannose) asparagine; by host" evidence="6">
    <location>
        <position position="423"/>
    </location>
</feature>
<feature type="glycosylation site" description="N-linked (GlcNAc...) (high mannose) asparagine; by host" evidence="6">
    <location>
        <position position="430"/>
    </location>
</feature>
<feature type="glycosylation site" description="N-linked (GlcNAc...) (high mannose) asparagine; by host" evidence="6">
    <location>
        <position position="448"/>
    </location>
</feature>
<feature type="glycosylation site" description="N-linked (GlcNAc...) (high mannose) asparagine; by host" evidence="6">
    <location>
        <position position="477"/>
    </location>
</feature>
<feature type="glycosylation site" description="N-linked (GlcNAc...) (high mannose) asparagine; by host" evidence="6">
    <location>
        <position position="534"/>
    </location>
</feature>
<feature type="glycosylation site" description="N-linked (GlcNAc...) (high mannose) asparagine; by host" evidence="6">
    <location>
        <position position="542"/>
    </location>
</feature>
<feature type="glycosylation site" description="N-linked (GlcNAc...) (high mannose) asparagine; by host" evidence="6">
    <location>
        <position position="558"/>
    </location>
</feature>
<feature type="glycosylation site" description="N-linked (GlcNAc...) (high mannose) asparagine; by host" evidence="6">
    <location>
        <position position="578"/>
    </location>
</feature>
<feature type="glycosylation site" description="N-linked (GlcNAc...) (high mannose) asparagine; by host" evidence="6">
    <location>
        <position position="627"/>
    </location>
</feature>
<feature type="glycosylation site" description="N-linked (GlcNAc...) (high mannose) asparagine; by host" evidence="6">
    <location>
        <position position="649"/>
    </location>
</feature>
<feature type="disulfide bond" evidence="6">
    <location>
        <begin position="429"/>
        <end position="554"/>
    </location>
</feature>
<feature type="disulfide bond" evidence="6">
    <location>
        <begin position="452"/>
        <end position="459"/>
    </location>
</feature>
<feature type="disulfide bond" evidence="6">
    <location>
        <begin position="488"/>
        <end position="496"/>
    </location>
</feature>
<feature type="disulfide bond" evidence="6">
    <location>
        <begin position="505"/>
        <end position="510"/>
    </location>
</feature>
<feature type="disulfide bond" evidence="6">
    <location>
        <begin position="566"/>
        <end position="571"/>
    </location>
</feature>
<feature type="disulfide bond" evidence="6">
    <location>
        <begin position="585"/>
        <end position="589"/>
    </location>
</feature>
<feature type="disulfide bond" evidence="6">
    <location>
        <begin position="601"/>
        <end position="624"/>
    </location>
</feature>
<feature type="disulfide bond" evidence="6">
    <location>
        <begin position="611"/>
        <end position="648"/>
    </location>
</feature>
<feature type="disulfide bond" evidence="6">
    <location>
        <begin position="656"/>
        <end position="681"/>
    </location>
</feature>
<feature type="cross-link" description="Glycyl lysine isopeptide (Lys-Gly) (interchain with G-Cter in ubiquitin)" evidence="6">
    <location>
        <position position="2350"/>
    </location>
</feature>
<feature type="mutagenesis site" description="Improves RdRp dinucleotide synthesis and de novo RNA synthesis efficiency at the transition-to-elongation step." evidence="21">
    <original>V</original>
    <variation>I</variation>
    <location>
        <position position="2847"/>
    </location>
</feature>
<feature type="strand" evidence="26">
    <location>
        <begin position="2444"/>
        <end position="2448"/>
    </location>
</feature>
<feature type="helix" evidence="26">
    <location>
        <begin position="2467"/>
        <end position="2470"/>
    </location>
</feature>
<feature type="helix" evidence="26">
    <location>
        <begin position="2476"/>
        <end position="2478"/>
    </location>
</feature>
<feature type="strand" evidence="26">
    <location>
        <begin position="2479"/>
        <end position="2481"/>
    </location>
</feature>
<feature type="helix" evidence="26">
    <location>
        <begin position="2484"/>
        <end position="2486"/>
    </location>
</feature>
<feature type="helix" evidence="26">
    <location>
        <begin position="2487"/>
        <end position="2494"/>
    </location>
</feature>
<feature type="helix" evidence="26">
    <location>
        <begin position="2504"/>
        <end position="2517"/>
    </location>
</feature>
<feature type="helix" evidence="26">
    <location>
        <begin position="2527"/>
        <end position="2532"/>
    </location>
</feature>
<feature type="strand" evidence="25">
    <location>
        <begin position="2542"/>
        <end position="2544"/>
    </location>
</feature>
<feature type="helix" evidence="26">
    <location>
        <begin position="2547"/>
        <end position="2551"/>
    </location>
</feature>
<feature type="helix" evidence="26">
    <location>
        <begin position="2555"/>
        <end position="2570"/>
    </location>
</feature>
<feature type="strand" evidence="26">
    <location>
        <begin position="2572"/>
        <end position="2574"/>
    </location>
</feature>
<feature type="strand" evidence="26">
    <location>
        <begin position="2578"/>
        <end position="2582"/>
    </location>
</feature>
<feature type="strand" evidence="26">
    <location>
        <begin position="2586"/>
        <end position="2588"/>
    </location>
</feature>
<feature type="turn" evidence="27">
    <location>
        <begin position="2591"/>
        <end position="2593"/>
    </location>
</feature>
<feature type="strand" evidence="26">
    <location>
        <begin position="2601"/>
        <end position="2604"/>
    </location>
</feature>
<feature type="helix" evidence="26">
    <location>
        <begin position="2607"/>
        <end position="2629"/>
    </location>
</feature>
<feature type="helix" evidence="26">
    <location>
        <begin position="2630"/>
        <end position="2632"/>
    </location>
</feature>
<feature type="helix" evidence="26">
    <location>
        <begin position="2634"/>
        <end position="2636"/>
    </location>
</feature>
<feature type="helix" evidence="26">
    <location>
        <begin position="2639"/>
        <end position="2652"/>
    </location>
</feature>
<feature type="strand" evidence="26">
    <location>
        <begin position="2653"/>
        <end position="2661"/>
    </location>
</feature>
<feature type="helix" evidence="26">
    <location>
        <begin position="2666"/>
        <end position="2669"/>
    </location>
</feature>
<feature type="helix" evidence="26">
    <location>
        <begin position="2672"/>
        <end position="2682"/>
    </location>
</feature>
<feature type="helix" evidence="26">
    <location>
        <begin position="2689"/>
        <end position="2701"/>
    </location>
</feature>
<feature type="turn" evidence="26">
    <location>
        <begin position="2702"/>
        <end position="2704"/>
    </location>
</feature>
<feature type="strand" evidence="26">
    <location>
        <begin position="2706"/>
        <end position="2709"/>
    </location>
</feature>
<feature type="strand" evidence="26">
    <location>
        <begin position="2715"/>
        <end position="2719"/>
    </location>
</feature>
<feature type="helix" evidence="26">
    <location>
        <begin position="2728"/>
        <end position="2748"/>
    </location>
</feature>
<feature type="strand" evidence="26">
    <location>
        <begin position="2751"/>
        <end position="2758"/>
    </location>
</feature>
<feature type="strand" evidence="26">
    <location>
        <begin position="2761"/>
        <end position="2767"/>
    </location>
</feature>
<feature type="helix" evidence="26">
    <location>
        <begin position="2771"/>
        <end position="2787"/>
    </location>
</feature>
<feature type="strand" evidence="26">
    <location>
        <begin position="2792"/>
        <end position="2794"/>
    </location>
</feature>
<feature type="helix" evidence="26">
    <location>
        <begin position="2802"/>
        <end position="2804"/>
    </location>
</feature>
<feature type="strand" evidence="26">
    <location>
        <begin position="2810"/>
        <end position="2816"/>
    </location>
</feature>
<feature type="strand" evidence="26">
    <location>
        <begin position="2822"/>
        <end position="2828"/>
    </location>
</feature>
<feature type="helix" evidence="26">
    <location>
        <begin position="2831"/>
        <end position="2842"/>
    </location>
</feature>
<feature type="strand" evidence="26">
    <location>
        <begin position="2846"/>
        <end position="2849"/>
    </location>
</feature>
<feature type="helix" evidence="26">
    <location>
        <begin position="2850"/>
        <end position="2856"/>
    </location>
</feature>
<feature type="turn" evidence="26">
    <location>
        <begin position="2857"/>
        <end position="2859"/>
    </location>
</feature>
<feature type="helix" evidence="26">
    <location>
        <begin position="2861"/>
        <end position="2865"/>
    </location>
</feature>
<feature type="helix" evidence="26">
    <location>
        <begin position="2867"/>
        <end position="2878"/>
    </location>
</feature>
<feature type="strand" evidence="26">
    <location>
        <begin position="2885"/>
        <end position="2889"/>
    </location>
</feature>
<feature type="strand" evidence="26">
    <location>
        <begin position="2892"/>
        <end position="2896"/>
    </location>
</feature>
<feature type="helix" evidence="26">
    <location>
        <begin position="2898"/>
        <end position="2900"/>
    </location>
</feature>
<feature type="helix" evidence="26">
    <location>
        <begin position="2901"/>
        <end position="2909"/>
    </location>
</feature>
<feature type="helix" evidence="26">
    <location>
        <begin position="2911"/>
        <end position="2914"/>
    </location>
</feature>
<feature type="helix" evidence="26">
    <location>
        <begin position="2921"/>
        <end position="2934"/>
    </location>
</feature>
<feature type="helix" evidence="26">
    <location>
        <begin position="2939"/>
        <end position="2955"/>
    </location>
</feature>
<feature type="helix" evidence="26">
    <location>
        <begin position="2958"/>
        <end position="2967"/>
    </location>
</feature>
<feature type="helix" evidence="26">
    <location>
        <begin position="2969"/>
        <end position="2971"/>
    </location>
</feature>
<feature type="strand" evidence="26">
    <location>
        <begin position="2972"/>
        <end position="2974"/>
    </location>
</feature>
<feature type="helix" evidence="26">
    <location>
        <begin position="2982"/>
        <end position="2986"/>
    </location>
</feature>
<feature type="turn" evidence="26">
    <location>
        <begin position="2990"/>
        <end position="2993"/>
    </location>
</feature>
<feature type="helix" evidence="26">
    <location>
        <begin position="2994"/>
        <end position="2996"/>
    </location>
</feature>
<feature type="strand" evidence="26">
    <location>
        <begin position="2999"/>
        <end position="3001"/>
    </location>
</feature>
<feature type="strand" evidence="27">
    <location>
        <begin position="3003"/>
        <end position="3005"/>
    </location>
</feature>
<proteinExistence type="evidence at protein level"/>